<name>ERCC3_HUMAN</name>
<sequence length="782" mass="89278">MGKRDRADRDKKKSRKRHYEDEEDDEEDAPGNDPQEAVPSAAGKQVDESGTKVDEYGAKDYRLQMPLKDDHTSRPLWVAPDGHIFLEAFSPVYKYAQDFLVAIAEPVCRPTHVHEYKLTAYSLYAAVSVGLQTSDITEYLRKLSKTGVPDGIMQFIKLCTVSYGKVKLVLKHNRYFVESCHPDVIQHLLQDPVIRECRLRNSEGEATELITETFTSKSAISKTAESSGGPSTSRVTDPQGKSDIPMDLFDFYEQMDKDEEEEEETQTVSFEVKQEMIEELQKRCIHLEYPLLAEYDFRNDSVNPDINIDLKPTAVLRPYQEKSLRKMFGNGRARSGVIVLPCGAGKSLVGVTAACTVRKRCLVLGNSAVSVEQWKAQFKMWSTIDDSQICRFTSDAKDKPIGCSVAISTYSMLGHTTKRSWEAERVMEWLKTQEWGLMILDEVHTIPAKMFRRVLTIVQAHCKLGLTATLVREDDKIVDLNFLIGPKLYEANWMELQNNGYIAKVQCAEVWCPMSPEFYREYVAIKTKKRILLYTMNPNKFRACQFLIKFHERRNDKIIVFADNVFALKEYAIRLNKPYIYGPTSQGERMQILQNFKHNPKINTIFISKVGDTSFDLPEANVLIQISSHGGSRRQEAQRLGRVLRAKKGMVAEEYNAFFYSLVSQDTQEMAYSTKRQRFLVDQGYSFKVITKLAGMEEEDLAFSTKEEQQQLLQKVLAATDLDAEEEVVAGEFGSRSSQASRRFGTMSSMSGADDTVYMEYHSSRSKAPSKHVHPLFKRFRK</sequence>
<gene>
    <name evidence="29" type="primary">ERCC3</name>
    <name type="synonym">XPB</name>
    <name evidence="28" type="synonym">XPBC</name>
</gene>
<accession>P19447</accession>
<accession>Q53QM0</accession>
<evidence type="ECO:0000255" key="1"/>
<evidence type="ECO:0000255" key="2">
    <source>
        <dbReference type="PROSITE-ProRule" id="PRU00541"/>
    </source>
</evidence>
<evidence type="ECO:0000255" key="3">
    <source>
        <dbReference type="PROSITE-ProRule" id="PRU00542"/>
    </source>
</evidence>
<evidence type="ECO:0000256" key="4">
    <source>
        <dbReference type="SAM" id="MobiDB-lite"/>
    </source>
</evidence>
<evidence type="ECO:0000269" key="5">
    <source>
    </source>
</evidence>
<evidence type="ECO:0000269" key="6">
    <source>
    </source>
</evidence>
<evidence type="ECO:0000269" key="7">
    <source>
    </source>
</evidence>
<evidence type="ECO:0000269" key="8">
    <source>
    </source>
</evidence>
<evidence type="ECO:0000269" key="9">
    <source>
    </source>
</evidence>
<evidence type="ECO:0000269" key="10">
    <source>
    </source>
</evidence>
<evidence type="ECO:0000269" key="11">
    <source>
    </source>
</evidence>
<evidence type="ECO:0000269" key="12">
    <source>
    </source>
</evidence>
<evidence type="ECO:0000269" key="13">
    <source>
    </source>
</evidence>
<evidence type="ECO:0000269" key="14">
    <source>
    </source>
</evidence>
<evidence type="ECO:0000269" key="15">
    <source>
    </source>
</evidence>
<evidence type="ECO:0000269" key="16">
    <source>
    </source>
</evidence>
<evidence type="ECO:0000269" key="17">
    <source>
    </source>
</evidence>
<evidence type="ECO:0000269" key="18">
    <source>
    </source>
</evidence>
<evidence type="ECO:0000269" key="19">
    <source>
    </source>
</evidence>
<evidence type="ECO:0000269" key="20">
    <source>
    </source>
</evidence>
<evidence type="ECO:0000269" key="21">
    <source>
    </source>
</evidence>
<evidence type="ECO:0000269" key="22">
    <source>
    </source>
</evidence>
<evidence type="ECO:0000269" key="23">
    <source>
    </source>
</evidence>
<evidence type="ECO:0000269" key="24">
    <source>
    </source>
</evidence>
<evidence type="ECO:0000269" key="25">
    <source>
    </source>
</evidence>
<evidence type="ECO:0000269" key="26">
    <source>
    </source>
</evidence>
<evidence type="ECO:0000269" key="27">
    <source ref="4"/>
</evidence>
<evidence type="ECO:0000303" key="28">
    <source>
    </source>
</evidence>
<evidence type="ECO:0000303" key="29">
    <source>
    </source>
</evidence>
<evidence type="ECO:0000303" key="30">
    <source>
    </source>
</evidence>
<evidence type="ECO:0000303" key="31">
    <source>
    </source>
</evidence>
<evidence type="ECO:0000303" key="32">
    <source>
    </source>
</evidence>
<evidence type="ECO:0000305" key="33"/>
<evidence type="ECO:0000305" key="34">
    <source>
    </source>
</evidence>
<evidence type="ECO:0000305" key="35">
    <source>
    </source>
</evidence>
<evidence type="ECO:0000305" key="36">
    <source>
    </source>
</evidence>
<evidence type="ECO:0000305" key="37">
    <source>
    </source>
</evidence>
<evidence type="ECO:0000312" key="38">
    <source>
        <dbReference type="PDB" id="7NVV"/>
    </source>
</evidence>
<evidence type="ECO:0000312" key="39">
    <source>
        <dbReference type="PDB" id="7NVX"/>
    </source>
</evidence>
<evidence type="ECO:0007744" key="40">
    <source>
        <dbReference type="PDB" id="4ERN"/>
    </source>
</evidence>
<evidence type="ECO:0007744" key="41">
    <source>
        <dbReference type="PDB" id="5IVW"/>
    </source>
</evidence>
<evidence type="ECO:0007744" key="42">
    <source>
        <dbReference type="PDB" id="5IY6"/>
    </source>
</evidence>
<evidence type="ECO:0007744" key="43">
    <source>
        <dbReference type="PDB" id="5IY7"/>
    </source>
</evidence>
<evidence type="ECO:0007744" key="44">
    <source>
        <dbReference type="PDB" id="5IY8"/>
    </source>
</evidence>
<evidence type="ECO:0007744" key="45">
    <source>
        <dbReference type="PDB" id="5IY9"/>
    </source>
</evidence>
<evidence type="ECO:0007744" key="46">
    <source>
        <dbReference type="PDB" id="6RO4"/>
    </source>
</evidence>
<evidence type="ECO:0007744" key="47">
    <source>
        <dbReference type="PDB" id="7NVV"/>
    </source>
</evidence>
<evidence type="ECO:0007744" key="48">
    <source>
        <dbReference type="PDB" id="7NVW"/>
    </source>
</evidence>
<evidence type="ECO:0007744" key="49">
    <source>
        <dbReference type="PDB" id="7NVX"/>
    </source>
</evidence>
<evidence type="ECO:0007744" key="50">
    <source>
        <dbReference type="PDB" id="7NVY"/>
    </source>
</evidence>
<evidence type="ECO:0007744" key="51">
    <source>
        <dbReference type="PDB" id="7NVZ"/>
    </source>
</evidence>
<evidence type="ECO:0007744" key="52">
    <source>
        <dbReference type="PDB" id="7NW0"/>
    </source>
</evidence>
<evidence type="ECO:0007744" key="53">
    <source>
    </source>
</evidence>
<evidence type="ECO:0007829" key="54">
    <source>
        <dbReference type="PDB" id="4ERN"/>
    </source>
</evidence>
<evidence type="ECO:0007829" key="55">
    <source>
        <dbReference type="PDB" id="6RO4"/>
    </source>
</evidence>
<evidence type="ECO:0007829" key="56">
    <source>
        <dbReference type="PDB" id="7AD8"/>
    </source>
</evidence>
<evidence type="ECO:0007829" key="57">
    <source>
        <dbReference type="PDB" id="7NVV"/>
    </source>
</evidence>
<evidence type="ECO:0007829" key="58">
    <source>
        <dbReference type="PDB" id="8EBU"/>
    </source>
</evidence>
<dbReference type="EC" id="5.6.2.4" evidence="24 37"/>
<dbReference type="EMBL" id="M31899">
    <property type="protein sequence ID" value="AAA52396.1"/>
    <property type="molecule type" value="mRNA"/>
</dbReference>
<dbReference type="EMBL" id="AY163769">
    <property type="protein sequence ID" value="AAN46739.1"/>
    <property type="molecule type" value="Genomic_DNA"/>
</dbReference>
<dbReference type="EMBL" id="AC110926">
    <property type="protein sequence ID" value="AAY15069.1"/>
    <property type="molecule type" value="Genomic_DNA"/>
</dbReference>
<dbReference type="EMBL" id="CH471103">
    <property type="protein sequence ID" value="EAW95313.1"/>
    <property type="molecule type" value="Genomic_DNA"/>
</dbReference>
<dbReference type="EMBL" id="BC008820">
    <property type="protein sequence ID" value="AAH08820.1"/>
    <property type="molecule type" value="mRNA"/>
</dbReference>
<dbReference type="CCDS" id="CCDS2144.1"/>
<dbReference type="PIR" id="A35661">
    <property type="entry name" value="A35661"/>
</dbReference>
<dbReference type="RefSeq" id="NP_000113.1">
    <property type="nucleotide sequence ID" value="NM_000122.2"/>
</dbReference>
<dbReference type="PDB" id="4ERN">
    <property type="method" value="X-ray"/>
    <property type="resolution" value="1.80 A"/>
    <property type="chains" value="A=494-782"/>
</dbReference>
<dbReference type="PDB" id="5IVW">
    <property type="method" value="EM"/>
    <property type="resolution" value="10.00 A"/>
    <property type="chains" value="V=1-782"/>
</dbReference>
<dbReference type="PDB" id="5IY6">
    <property type="method" value="EM"/>
    <property type="resolution" value="7.20 A"/>
    <property type="chains" value="V=1-782"/>
</dbReference>
<dbReference type="PDB" id="5IY7">
    <property type="method" value="EM"/>
    <property type="resolution" value="8.60 A"/>
    <property type="chains" value="V=1-782"/>
</dbReference>
<dbReference type="PDB" id="5IY8">
    <property type="method" value="EM"/>
    <property type="resolution" value="7.90 A"/>
    <property type="chains" value="V=1-782"/>
</dbReference>
<dbReference type="PDB" id="5IY9">
    <property type="method" value="EM"/>
    <property type="resolution" value="6.30 A"/>
    <property type="chains" value="V=1-782"/>
</dbReference>
<dbReference type="PDB" id="5OF4">
    <property type="method" value="EM"/>
    <property type="resolution" value="4.40 A"/>
    <property type="chains" value="A=265-782"/>
</dbReference>
<dbReference type="PDB" id="6NMI">
    <property type="method" value="EM"/>
    <property type="resolution" value="3.70 A"/>
    <property type="chains" value="A=34-730"/>
</dbReference>
<dbReference type="PDB" id="6O9L">
    <property type="method" value="EM"/>
    <property type="resolution" value="7.20 A"/>
    <property type="chains" value="7=1-782"/>
</dbReference>
<dbReference type="PDB" id="6O9M">
    <property type="method" value="EM"/>
    <property type="resolution" value="4.40 A"/>
    <property type="chains" value="7=1-782"/>
</dbReference>
<dbReference type="PDB" id="6RO4">
    <property type="method" value="EM"/>
    <property type="resolution" value="3.50 A"/>
    <property type="chains" value="A=1-782"/>
</dbReference>
<dbReference type="PDB" id="7AD8">
    <property type="method" value="EM"/>
    <property type="resolution" value="3.50 A"/>
    <property type="chains" value="A=1-782"/>
</dbReference>
<dbReference type="PDB" id="7EGB">
    <property type="method" value="EM"/>
    <property type="resolution" value="3.30 A"/>
    <property type="chains" value="6=1-782"/>
</dbReference>
<dbReference type="PDB" id="7EGC">
    <property type="method" value="EM"/>
    <property type="resolution" value="3.90 A"/>
    <property type="chains" value="6=1-782"/>
</dbReference>
<dbReference type="PDB" id="7ENA">
    <property type="method" value="EM"/>
    <property type="resolution" value="4.07 A"/>
    <property type="chains" value="6=1-782"/>
</dbReference>
<dbReference type="PDB" id="7ENC">
    <property type="method" value="EM"/>
    <property type="resolution" value="4.13 A"/>
    <property type="chains" value="6=1-782"/>
</dbReference>
<dbReference type="PDB" id="7LBM">
    <property type="method" value="EM"/>
    <property type="resolution" value="4.80 A"/>
    <property type="chains" value="W=1-782"/>
</dbReference>
<dbReference type="PDB" id="7NVR">
    <property type="method" value="EM"/>
    <property type="resolution" value="4.50 A"/>
    <property type="chains" value="7=1-782"/>
</dbReference>
<dbReference type="PDB" id="7NVV">
    <property type="method" value="EM"/>
    <property type="resolution" value="2.90 A"/>
    <property type="chains" value="7=1-782"/>
</dbReference>
<dbReference type="PDB" id="7NVW">
    <property type="method" value="EM"/>
    <property type="resolution" value="4.30 A"/>
    <property type="chains" value="7=1-782"/>
</dbReference>
<dbReference type="PDB" id="7NVX">
    <property type="method" value="EM"/>
    <property type="resolution" value="3.90 A"/>
    <property type="chains" value="7=1-782"/>
</dbReference>
<dbReference type="PDB" id="7NVY">
    <property type="method" value="EM"/>
    <property type="resolution" value="7.30 A"/>
    <property type="chains" value="7=1-782"/>
</dbReference>
<dbReference type="PDB" id="7NVZ">
    <property type="method" value="EM"/>
    <property type="resolution" value="7.20 A"/>
    <property type="chains" value="7=1-782"/>
</dbReference>
<dbReference type="PDB" id="7NW0">
    <property type="method" value="EM"/>
    <property type="resolution" value="6.60 A"/>
    <property type="chains" value="7=1-782"/>
</dbReference>
<dbReference type="PDB" id="8BVW">
    <property type="method" value="EM"/>
    <property type="resolution" value="4.00 A"/>
    <property type="chains" value="0=1-772"/>
</dbReference>
<dbReference type="PDB" id="8BYQ">
    <property type="method" value="EM"/>
    <property type="resolution" value="4.10 A"/>
    <property type="chains" value="0=1-782"/>
</dbReference>
<dbReference type="PDB" id="8EBS">
    <property type="method" value="EM"/>
    <property type="resolution" value="4.00 A"/>
    <property type="chains" value="A=1-782"/>
</dbReference>
<dbReference type="PDB" id="8EBT">
    <property type="method" value="EM"/>
    <property type="resolution" value="3.90 A"/>
    <property type="chains" value="A=52-721"/>
</dbReference>
<dbReference type="PDB" id="8EBU">
    <property type="method" value="EM"/>
    <property type="resolution" value="3.30 A"/>
    <property type="chains" value="A=1-782"/>
</dbReference>
<dbReference type="PDB" id="8EBV">
    <property type="method" value="EM"/>
    <property type="resolution" value="7.10 A"/>
    <property type="chains" value="A=1-782"/>
</dbReference>
<dbReference type="PDB" id="8EBW">
    <property type="method" value="EM"/>
    <property type="resolution" value="5.60 A"/>
    <property type="chains" value="A=1-782"/>
</dbReference>
<dbReference type="PDB" id="8EBX">
    <property type="method" value="EM"/>
    <property type="resolution" value="3.60 A"/>
    <property type="chains" value="A=1-782"/>
</dbReference>
<dbReference type="PDB" id="8EBY">
    <property type="method" value="EM"/>
    <property type="resolution" value="3.60 A"/>
    <property type="chains" value="A=1-782"/>
</dbReference>
<dbReference type="PDB" id="8GXQ">
    <property type="method" value="EM"/>
    <property type="resolution" value="5.04 A"/>
    <property type="chains" value="HH=1-782"/>
</dbReference>
<dbReference type="PDB" id="8GXS">
    <property type="method" value="EM"/>
    <property type="resolution" value="4.16 A"/>
    <property type="chains" value="HH=1-782"/>
</dbReference>
<dbReference type="PDB" id="8WAK">
    <property type="method" value="EM"/>
    <property type="resolution" value="5.47 A"/>
    <property type="chains" value="6=1-782"/>
</dbReference>
<dbReference type="PDB" id="8WAL">
    <property type="method" value="EM"/>
    <property type="resolution" value="8.52 A"/>
    <property type="chains" value="6=1-782"/>
</dbReference>
<dbReference type="PDB" id="8WAN">
    <property type="method" value="EM"/>
    <property type="resolution" value="6.07 A"/>
    <property type="chains" value="6=1-782"/>
</dbReference>
<dbReference type="PDB" id="8WAO">
    <property type="method" value="EM"/>
    <property type="resolution" value="6.40 A"/>
    <property type="chains" value="6=1-782"/>
</dbReference>
<dbReference type="PDB" id="8WAP">
    <property type="method" value="EM"/>
    <property type="resolution" value="5.85 A"/>
    <property type="chains" value="6=1-782"/>
</dbReference>
<dbReference type="PDB" id="8WAQ">
    <property type="method" value="EM"/>
    <property type="resolution" value="6.29 A"/>
    <property type="chains" value="6=1-782"/>
</dbReference>
<dbReference type="PDB" id="8WAR">
    <property type="method" value="EM"/>
    <property type="resolution" value="7.20 A"/>
    <property type="chains" value="6=1-782"/>
</dbReference>
<dbReference type="PDB" id="8WAS">
    <property type="method" value="EM"/>
    <property type="resolution" value="6.13 A"/>
    <property type="chains" value="6=1-782"/>
</dbReference>
<dbReference type="PDBsum" id="4ERN"/>
<dbReference type="PDBsum" id="5IVW"/>
<dbReference type="PDBsum" id="5IY6"/>
<dbReference type="PDBsum" id="5IY7"/>
<dbReference type="PDBsum" id="5IY8"/>
<dbReference type="PDBsum" id="5IY9"/>
<dbReference type="PDBsum" id="5OF4"/>
<dbReference type="PDBsum" id="6NMI"/>
<dbReference type="PDBsum" id="6O9L"/>
<dbReference type="PDBsum" id="6O9M"/>
<dbReference type="PDBsum" id="6RO4"/>
<dbReference type="PDBsum" id="7AD8"/>
<dbReference type="PDBsum" id="7EGB"/>
<dbReference type="PDBsum" id="7EGC"/>
<dbReference type="PDBsum" id="7ENA"/>
<dbReference type="PDBsum" id="7ENC"/>
<dbReference type="PDBsum" id="7LBM"/>
<dbReference type="PDBsum" id="7NVR"/>
<dbReference type="PDBsum" id="7NVV"/>
<dbReference type="PDBsum" id="7NVW"/>
<dbReference type="PDBsum" id="7NVX"/>
<dbReference type="PDBsum" id="7NVY"/>
<dbReference type="PDBsum" id="7NVZ"/>
<dbReference type="PDBsum" id="7NW0"/>
<dbReference type="PDBsum" id="8BVW"/>
<dbReference type="PDBsum" id="8BYQ"/>
<dbReference type="PDBsum" id="8EBS"/>
<dbReference type="PDBsum" id="8EBT"/>
<dbReference type="PDBsum" id="8EBU"/>
<dbReference type="PDBsum" id="8EBV"/>
<dbReference type="PDBsum" id="8EBW"/>
<dbReference type="PDBsum" id="8EBX"/>
<dbReference type="PDBsum" id="8EBY"/>
<dbReference type="PDBsum" id="8GXQ"/>
<dbReference type="PDBsum" id="8GXS"/>
<dbReference type="PDBsum" id="8WAK"/>
<dbReference type="PDBsum" id="8WAL"/>
<dbReference type="PDBsum" id="8WAN"/>
<dbReference type="PDBsum" id="8WAO"/>
<dbReference type="PDBsum" id="8WAP"/>
<dbReference type="PDBsum" id="8WAQ"/>
<dbReference type="PDBsum" id="8WAR"/>
<dbReference type="PDBsum" id="8WAS"/>
<dbReference type="EMDB" id="EMD-0452"/>
<dbReference type="EMDB" id="EMD-12610"/>
<dbReference type="EMDB" id="EMD-12614"/>
<dbReference type="EMDB" id="EMD-12615"/>
<dbReference type="EMDB" id="EMD-12616"/>
<dbReference type="EMDB" id="EMD-12617"/>
<dbReference type="EMDB" id="EMD-12618"/>
<dbReference type="EMDB" id="EMD-12619"/>
<dbReference type="EMDB" id="EMD-16274"/>
<dbReference type="EMDB" id="EMD-16331"/>
<dbReference type="EMDB" id="EMD-23255"/>
<dbReference type="EMDB" id="EMD-27996"/>
<dbReference type="EMDB" id="EMD-27997"/>
<dbReference type="EMDB" id="EMD-27998"/>
<dbReference type="EMDB" id="EMD-27999"/>
<dbReference type="EMDB" id="EMD-28000"/>
<dbReference type="EMDB" id="EMD-28001"/>
<dbReference type="EMDB" id="EMD-28002"/>
<dbReference type="EMDB" id="EMD-29673"/>
<dbReference type="EMDB" id="EMD-29674"/>
<dbReference type="EMDB" id="EMD-31111"/>
<dbReference type="EMDB" id="EMD-31112"/>
<dbReference type="EMDB" id="EMD-31204"/>
<dbReference type="EMDB" id="EMD-31207"/>
<dbReference type="EMDB" id="EMD-34359"/>
<dbReference type="EMDB" id="EMD-34360"/>
<dbReference type="EMDB" id="EMD-37395"/>
<dbReference type="EMDB" id="EMD-37396"/>
<dbReference type="EMDB" id="EMD-37398"/>
<dbReference type="EMDB" id="EMD-37399"/>
<dbReference type="EMDB" id="EMD-37400"/>
<dbReference type="EMDB" id="EMD-37401"/>
<dbReference type="EMDB" id="EMD-37402"/>
<dbReference type="EMDB" id="EMD-37403"/>
<dbReference type="EMDB" id="EMD-3802"/>
<dbReference type="EMDB" id="EMD-4970"/>
<dbReference type="EMDB" id="EMD-8131"/>
<dbReference type="EMDB" id="EMD-8132"/>
<dbReference type="EMDB" id="EMD-8133"/>
<dbReference type="EMDB" id="EMD-8134"/>
<dbReference type="SMR" id="P19447"/>
<dbReference type="BioGRID" id="108383">
    <property type="interactions" value="184"/>
</dbReference>
<dbReference type="ComplexPortal" id="CPX-2395">
    <property type="entry name" value="General transcription factor TFIIH complex"/>
</dbReference>
<dbReference type="CORUM" id="P19447"/>
<dbReference type="DIP" id="DIP-83N"/>
<dbReference type="FunCoup" id="P19447">
    <property type="interactions" value="3328"/>
</dbReference>
<dbReference type="IntAct" id="P19447">
    <property type="interactions" value="113"/>
</dbReference>
<dbReference type="MINT" id="P19447"/>
<dbReference type="STRING" id="9606.ENSP00000285398"/>
<dbReference type="ChEMBL" id="CHEMBL4523193"/>
<dbReference type="MoonProt" id="P19447"/>
<dbReference type="iPTMnet" id="P19447"/>
<dbReference type="MetOSite" id="P19447"/>
<dbReference type="PhosphoSitePlus" id="P19447"/>
<dbReference type="BioMuta" id="ERCC3"/>
<dbReference type="DMDM" id="119541"/>
<dbReference type="jPOST" id="P19447"/>
<dbReference type="MassIVE" id="P19447"/>
<dbReference type="PaxDb" id="9606-ENSP00000285398"/>
<dbReference type="PeptideAtlas" id="P19447"/>
<dbReference type="ProteomicsDB" id="53665"/>
<dbReference type="Pumba" id="P19447"/>
<dbReference type="Antibodypedia" id="18449">
    <property type="antibodies" value="236 antibodies from 38 providers"/>
</dbReference>
<dbReference type="DNASU" id="2071"/>
<dbReference type="Ensembl" id="ENST00000285398.7">
    <property type="protein sequence ID" value="ENSP00000285398.2"/>
    <property type="gene ID" value="ENSG00000163161.14"/>
</dbReference>
<dbReference type="GeneID" id="2071"/>
<dbReference type="KEGG" id="hsa:2071"/>
<dbReference type="MANE-Select" id="ENST00000285398.7">
    <property type="protein sequence ID" value="ENSP00000285398.2"/>
    <property type="RefSeq nucleotide sequence ID" value="NM_000122.2"/>
    <property type="RefSeq protein sequence ID" value="NP_000113.1"/>
</dbReference>
<dbReference type="UCSC" id="uc002toh.1">
    <property type="organism name" value="human"/>
</dbReference>
<dbReference type="AGR" id="HGNC:3435"/>
<dbReference type="CTD" id="2071"/>
<dbReference type="DisGeNET" id="2071"/>
<dbReference type="GeneCards" id="ERCC3"/>
<dbReference type="GeneReviews" id="ERCC3"/>
<dbReference type="HGNC" id="HGNC:3435">
    <property type="gene designation" value="ERCC3"/>
</dbReference>
<dbReference type="HPA" id="ENSG00000163161">
    <property type="expression patterns" value="Low tissue specificity"/>
</dbReference>
<dbReference type="MalaCards" id="ERCC3"/>
<dbReference type="MIM" id="133510">
    <property type="type" value="gene"/>
</dbReference>
<dbReference type="MIM" id="610651">
    <property type="type" value="phenotype"/>
</dbReference>
<dbReference type="MIM" id="616390">
    <property type="type" value="phenotype"/>
</dbReference>
<dbReference type="neXtProt" id="NX_P19447"/>
<dbReference type="OpenTargets" id="ENSG00000163161"/>
<dbReference type="Orphanet" id="33364">
    <property type="disease" value="Trichothiodystrophy"/>
</dbReference>
<dbReference type="Orphanet" id="910">
    <property type="disease" value="Xeroderma pigmentosum"/>
</dbReference>
<dbReference type="Orphanet" id="220295">
    <property type="disease" value="Xeroderma pigmentosum-Cockayne syndrome complex"/>
</dbReference>
<dbReference type="PharmGKB" id="PA27849"/>
<dbReference type="VEuPathDB" id="HostDB:ENSG00000163161"/>
<dbReference type="eggNOG" id="KOG1123">
    <property type="taxonomic scope" value="Eukaryota"/>
</dbReference>
<dbReference type="GeneTree" id="ENSGT00390000002204"/>
<dbReference type="HOGENOM" id="CLU_008213_0_0_1"/>
<dbReference type="InParanoid" id="P19447"/>
<dbReference type="OrthoDB" id="10262986at2759"/>
<dbReference type="PAN-GO" id="P19447">
    <property type="GO annotations" value="8 GO annotations based on evolutionary models"/>
</dbReference>
<dbReference type="PhylomeDB" id="P19447"/>
<dbReference type="TreeFam" id="TF101233"/>
<dbReference type="PathwayCommons" id="P19447"/>
<dbReference type="Reactome" id="R-HSA-112382">
    <property type="pathway name" value="Formation of RNA Pol II elongation complex"/>
</dbReference>
<dbReference type="Reactome" id="R-HSA-113418">
    <property type="pathway name" value="Formation of the Early Elongation Complex"/>
</dbReference>
<dbReference type="Reactome" id="R-HSA-167152">
    <property type="pathway name" value="Formation of HIV elongation complex in the absence of HIV Tat"/>
</dbReference>
<dbReference type="Reactome" id="R-HSA-167158">
    <property type="pathway name" value="Formation of the HIV-1 Early Elongation Complex"/>
</dbReference>
<dbReference type="Reactome" id="R-HSA-167160">
    <property type="pathway name" value="RNA Pol II CTD phosphorylation and interaction with CE during HIV infection"/>
</dbReference>
<dbReference type="Reactome" id="R-HSA-167161">
    <property type="pathway name" value="HIV Transcription Initiation"/>
</dbReference>
<dbReference type="Reactome" id="R-HSA-167162">
    <property type="pathway name" value="RNA Polymerase II HIV Promoter Escape"/>
</dbReference>
<dbReference type="Reactome" id="R-HSA-167172">
    <property type="pathway name" value="Transcription of the HIV genome"/>
</dbReference>
<dbReference type="Reactome" id="R-HSA-167200">
    <property type="pathway name" value="Formation of HIV-1 elongation complex containing HIV-1 Tat"/>
</dbReference>
<dbReference type="Reactome" id="R-HSA-167246">
    <property type="pathway name" value="Tat-mediated elongation of the HIV-1 transcript"/>
</dbReference>
<dbReference type="Reactome" id="R-HSA-427413">
    <property type="pathway name" value="NoRC negatively regulates rRNA expression"/>
</dbReference>
<dbReference type="Reactome" id="R-HSA-5696395">
    <property type="pathway name" value="Formation of Incision Complex in GG-NER"/>
</dbReference>
<dbReference type="Reactome" id="R-HSA-5696400">
    <property type="pathway name" value="Dual Incision in GG-NER"/>
</dbReference>
<dbReference type="Reactome" id="R-HSA-674695">
    <property type="pathway name" value="RNA Polymerase II Pre-transcription Events"/>
</dbReference>
<dbReference type="Reactome" id="R-HSA-6781823">
    <property type="pathway name" value="Formation of TC-NER Pre-Incision Complex"/>
</dbReference>
<dbReference type="Reactome" id="R-HSA-6781827">
    <property type="pathway name" value="Transcription-Coupled Nucleotide Excision Repair (TC-NER)"/>
</dbReference>
<dbReference type="Reactome" id="R-HSA-6782135">
    <property type="pathway name" value="Dual incision in TC-NER"/>
</dbReference>
<dbReference type="Reactome" id="R-HSA-6782210">
    <property type="pathway name" value="Gap-filling DNA repair synthesis and ligation in TC-NER"/>
</dbReference>
<dbReference type="Reactome" id="R-HSA-6796648">
    <property type="pathway name" value="TP53 Regulates Transcription of DNA Repair Genes"/>
</dbReference>
<dbReference type="Reactome" id="R-HSA-72086">
    <property type="pathway name" value="mRNA Capping"/>
</dbReference>
<dbReference type="Reactome" id="R-HSA-73762">
    <property type="pathway name" value="RNA Polymerase I Transcription Initiation"/>
</dbReference>
<dbReference type="Reactome" id="R-HSA-73772">
    <property type="pathway name" value="RNA Polymerase I Promoter Escape"/>
</dbReference>
<dbReference type="Reactome" id="R-HSA-73776">
    <property type="pathway name" value="RNA Polymerase II Promoter Escape"/>
</dbReference>
<dbReference type="Reactome" id="R-HSA-73779">
    <property type="pathway name" value="RNA Polymerase II Transcription Pre-Initiation And Promoter Opening"/>
</dbReference>
<dbReference type="Reactome" id="R-HSA-73863">
    <property type="pathway name" value="RNA Polymerase I Transcription Termination"/>
</dbReference>
<dbReference type="Reactome" id="R-HSA-75953">
    <property type="pathway name" value="RNA Polymerase II Transcription Initiation"/>
</dbReference>
<dbReference type="Reactome" id="R-HSA-75955">
    <property type="pathway name" value="RNA Polymerase II Transcription Elongation"/>
</dbReference>
<dbReference type="Reactome" id="R-HSA-76042">
    <property type="pathway name" value="RNA Polymerase II Transcription Initiation And Promoter Clearance"/>
</dbReference>
<dbReference type="Reactome" id="R-HSA-77075">
    <property type="pathway name" value="RNA Pol II CTD phosphorylation and interaction with CE"/>
</dbReference>
<dbReference type="SignaLink" id="P19447"/>
<dbReference type="SIGNOR" id="P19447"/>
<dbReference type="BioGRID-ORCS" id="2071">
    <property type="hits" value="703 hits in 1184 CRISPR screens"/>
</dbReference>
<dbReference type="ChiTaRS" id="ERCC3">
    <property type="organism name" value="human"/>
</dbReference>
<dbReference type="EvolutionaryTrace" id="P19447"/>
<dbReference type="GeneWiki" id="XPB"/>
<dbReference type="GenomeRNAi" id="2071"/>
<dbReference type="Pharos" id="P19447">
    <property type="development level" value="Tbio"/>
</dbReference>
<dbReference type="PRO" id="PR:P19447"/>
<dbReference type="Proteomes" id="UP000005640">
    <property type="component" value="Chromosome 2"/>
</dbReference>
<dbReference type="RNAct" id="P19447">
    <property type="molecule type" value="protein"/>
</dbReference>
<dbReference type="Bgee" id="ENSG00000163161">
    <property type="expression patterns" value="Expressed in sural nerve and 184 other cell types or tissues"/>
</dbReference>
<dbReference type="ExpressionAtlas" id="P19447">
    <property type="expression patterns" value="baseline and differential"/>
</dbReference>
<dbReference type="GO" id="GO:0005654">
    <property type="term" value="C:nucleoplasm"/>
    <property type="evidence" value="ECO:0000314"/>
    <property type="project" value="HPA"/>
</dbReference>
<dbReference type="GO" id="GO:0000112">
    <property type="term" value="C:nucleotide-excision repair factor 3 complex"/>
    <property type="evidence" value="ECO:0000318"/>
    <property type="project" value="GO_Central"/>
</dbReference>
<dbReference type="GO" id="GO:0005634">
    <property type="term" value="C:nucleus"/>
    <property type="evidence" value="ECO:0000304"/>
    <property type="project" value="UniProtKB"/>
</dbReference>
<dbReference type="GO" id="GO:0005669">
    <property type="term" value="C:transcription factor TFIID complex"/>
    <property type="evidence" value="ECO:0000314"/>
    <property type="project" value="UniProtKB"/>
</dbReference>
<dbReference type="GO" id="GO:0000439">
    <property type="term" value="C:transcription factor TFIIH core complex"/>
    <property type="evidence" value="ECO:0000314"/>
    <property type="project" value="UniProtKB"/>
</dbReference>
<dbReference type="GO" id="GO:0005675">
    <property type="term" value="C:transcription factor TFIIH holo complex"/>
    <property type="evidence" value="ECO:0000314"/>
    <property type="project" value="UniProtKB"/>
</dbReference>
<dbReference type="GO" id="GO:0097550">
    <property type="term" value="C:transcription preinitiation complex"/>
    <property type="evidence" value="ECO:0000318"/>
    <property type="project" value="GO_Central"/>
</dbReference>
<dbReference type="GO" id="GO:0043138">
    <property type="term" value="F:3'-5' DNA helicase activity"/>
    <property type="evidence" value="ECO:0000314"/>
    <property type="project" value="UniProtKB"/>
</dbReference>
<dbReference type="GO" id="GO:0005524">
    <property type="term" value="F:ATP binding"/>
    <property type="evidence" value="ECO:0007669"/>
    <property type="project" value="UniProtKB-KW"/>
</dbReference>
<dbReference type="GO" id="GO:0016887">
    <property type="term" value="F:ATP hydrolysis activity"/>
    <property type="evidence" value="ECO:0000314"/>
    <property type="project" value="UniProtKB"/>
</dbReference>
<dbReference type="GO" id="GO:0003684">
    <property type="term" value="F:damaged DNA binding"/>
    <property type="evidence" value="ECO:0000303"/>
    <property type="project" value="UniProtKB"/>
</dbReference>
<dbReference type="GO" id="GO:0003677">
    <property type="term" value="F:DNA binding"/>
    <property type="evidence" value="ECO:0000304"/>
    <property type="project" value="UniProtKB"/>
</dbReference>
<dbReference type="GO" id="GO:1990841">
    <property type="term" value="F:promoter-specific chromatin binding"/>
    <property type="evidence" value="ECO:0007669"/>
    <property type="project" value="Ensembl"/>
</dbReference>
<dbReference type="GO" id="GO:0006915">
    <property type="term" value="P:apoptotic process"/>
    <property type="evidence" value="ECO:0000315"/>
    <property type="project" value="UniProtKB"/>
</dbReference>
<dbReference type="GO" id="GO:0006281">
    <property type="term" value="P:DNA repair"/>
    <property type="evidence" value="ECO:0000315"/>
    <property type="project" value="UniProtKB"/>
</dbReference>
<dbReference type="GO" id="GO:0006265">
    <property type="term" value="P:DNA topological change"/>
    <property type="evidence" value="ECO:0000315"/>
    <property type="project" value="UniProtKB"/>
</dbReference>
<dbReference type="GO" id="GO:0048568">
    <property type="term" value="P:embryonic organ development"/>
    <property type="evidence" value="ECO:0000318"/>
    <property type="project" value="GO_Central"/>
</dbReference>
<dbReference type="GO" id="GO:0035315">
    <property type="term" value="P:hair cell differentiation"/>
    <property type="evidence" value="ECO:0000315"/>
    <property type="project" value="UniProtKB"/>
</dbReference>
<dbReference type="GO" id="GO:0006289">
    <property type="term" value="P:nucleotide-excision repair"/>
    <property type="evidence" value="ECO:0000315"/>
    <property type="project" value="UniProtKB"/>
</dbReference>
<dbReference type="GO" id="GO:0043065">
    <property type="term" value="P:positive regulation of apoptotic process"/>
    <property type="evidence" value="ECO:0000314"/>
    <property type="project" value="UniProtKB"/>
</dbReference>
<dbReference type="GO" id="GO:0008104">
    <property type="term" value="P:protein localization"/>
    <property type="evidence" value="ECO:0000315"/>
    <property type="project" value="UniProtKB"/>
</dbReference>
<dbReference type="GO" id="GO:1901990">
    <property type="term" value="P:regulation of mitotic cell cycle phase transition"/>
    <property type="evidence" value="ECO:0000315"/>
    <property type="project" value="UniProtKB"/>
</dbReference>
<dbReference type="GO" id="GO:0006979">
    <property type="term" value="P:response to oxidative stress"/>
    <property type="evidence" value="ECO:0000315"/>
    <property type="project" value="UniProtKB"/>
</dbReference>
<dbReference type="GO" id="GO:0009411">
    <property type="term" value="P:response to UV"/>
    <property type="evidence" value="ECO:0000315"/>
    <property type="project" value="UniProtKB"/>
</dbReference>
<dbReference type="GO" id="GO:0006366">
    <property type="term" value="P:transcription by RNA polymerase II"/>
    <property type="evidence" value="ECO:0000314"/>
    <property type="project" value="UniProtKB"/>
</dbReference>
<dbReference type="GO" id="GO:0006368">
    <property type="term" value="P:transcription elongation by RNA polymerase II"/>
    <property type="evidence" value="ECO:0000304"/>
    <property type="project" value="Reactome"/>
</dbReference>
<dbReference type="GO" id="GO:0006367">
    <property type="term" value="P:transcription initiation at RNA polymerase II promoter"/>
    <property type="evidence" value="ECO:0000314"/>
    <property type="project" value="UniProtKB"/>
</dbReference>
<dbReference type="GO" id="GO:0006283">
    <property type="term" value="P:transcription-coupled nucleotide-excision repair"/>
    <property type="evidence" value="ECO:0000314"/>
    <property type="project" value="UniProtKB"/>
</dbReference>
<dbReference type="GO" id="GO:0009650">
    <property type="term" value="P:UV protection"/>
    <property type="evidence" value="ECO:0007669"/>
    <property type="project" value="Ensembl"/>
</dbReference>
<dbReference type="CDD" id="cd18029">
    <property type="entry name" value="DEXHc_XPB"/>
    <property type="match status" value="1"/>
</dbReference>
<dbReference type="CDD" id="cd18789">
    <property type="entry name" value="SF2_C_XPB"/>
    <property type="match status" value="1"/>
</dbReference>
<dbReference type="FunFam" id="3.40.50.300:FF:000077">
    <property type="entry name" value="Probable DNA repair helicase RAD25"/>
    <property type="match status" value="1"/>
</dbReference>
<dbReference type="FunFam" id="3.40.50.300:FF:000117">
    <property type="entry name" value="Putative DNA repair helicase rad25"/>
    <property type="match status" value="1"/>
</dbReference>
<dbReference type="Gene3D" id="3.40.50.300">
    <property type="entry name" value="P-loop containing nucleotide triphosphate hydrolases"/>
    <property type="match status" value="2"/>
</dbReference>
<dbReference type="InterPro" id="IPR050615">
    <property type="entry name" value="ATP-dep_DNA_Helicase"/>
</dbReference>
<dbReference type="InterPro" id="IPR032438">
    <property type="entry name" value="ERCC3_RAD25_C"/>
</dbReference>
<dbReference type="InterPro" id="IPR006935">
    <property type="entry name" value="Helicase/UvrB_N"/>
</dbReference>
<dbReference type="InterPro" id="IPR014001">
    <property type="entry name" value="Helicase_ATP-bd"/>
</dbReference>
<dbReference type="InterPro" id="IPR001650">
    <property type="entry name" value="Helicase_C-like"/>
</dbReference>
<dbReference type="InterPro" id="IPR027417">
    <property type="entry name" value="P-loop_NTPase"/>
</dbReference>
<dbReference type="InterPro" id="IPR001161">
    <property type="entry name" value="XPB/Ssl2"/>
</dbReference>
<dbReference type="InterPro" id="IPR032830">
    <property type="entry name" value="XPB/Ssl2_N"/>
</dbReference>
<dbReference type="NCBIfam" id="TIGR00603">
    <property type="entry name" value="rad25"/>
    <property type="match status" value="1"/>
</dbReference>
<dbReference type="PANTHER" id="PTHR11274:SF0">
    <property type="entry name" value="GENERAL TRANSCRIPTION AND DNA REPAIR FACTOR IIH HELICASE SUBUNIT XPB"/>
    <property type="match status" value="1"/>
</dbReference>
<dbReference type="PANTHER" id="PTHR11274">
    <property type="entry name" value="RAD25/XP-B DNA REPAIR HELICASE"/>
    <property type="match status" value="1"/>
</dbReference>
<dbReference type="Pfam" id="PF16203">
    <property type="entry name" value="ERCC3_RAD25_C"/>
    <property type="match status" value="1"/>
</dbReference>
<dbReference type="Pfam" id="PF13625">
    <property type="entry name" value="Helicase_C_3"/>
    <property type="match status" value="1"/>
</dbReference>
<dbReference type="Pfam" id="PF04851">
    <property type="entry name" value="ResIII"/>
    <property type="match status" value="1"/>
</dbReference>
<dbReference type="PRINTS" id="PR00851">
    <property type="entry name" value="XRODRMPGMNTB"/>
</dbReference>
<dbReference type="SMART" id="SM00487">
    <property type="entry name" value="DEXDc"/>
    <property type="match status" value="1"/>
</dbReference>
<dbReference type="SMART" id="SM00490">
    <property type="entry name" value="HELICc"/>
    <property type="match status" value="1"/>
</dbReference>
<dbReference type="SUPFAM" id="SSF52540">
    <property type="entry name" value="P-loop containing nucleoside triphosphate hydrolases"/>
    <property type="match status" value="2"/>
</dbReference>
<dbReference type="PROSITE" id="PS51192">
    <property type="entry name" value="HELICASE_ATP_BIND_1"/>
    <property type="match status" value="1"/>
</dbReference>
<dbReference type="PROSITE" id="PS51194">
    <property type="entry name" value="HELICASE_CTER"/>
    <property type="match status" value="1"/>
</dbReference>
<keyword id="KW-0002">3D-structure</keyword>
<keyword id="KW-0067">ATP-binding</keyword>
<keyword id="KW-0172">Cockayne syndrome</keyword>
<keyword id="KW-0209">Deafness</keyword>
<keyword id="KW-0225">Disease variant</keyword>
<keyword id="KW-0227">DNA damage</keyword>
<keyword id="KW-0234">DNA repair</keyword>
<keyword id="KW-0238">DNA-binding</keyword>
<keyword id="KW-0242">Dwarfism</keyword>
<keyword id="KW-0347">Helicase</keyword>
<keyword id="KW-0945">Host-virus interaction</keyword>
<keyword id="KW-0378">Hydrolase</keyword>
<keyword id="KW-0977">Ichthyosis</keyword>
<keyword id="KW-0413">Isomerase</keyword>
<keyword id="KW-0547">Nucleotide-binding</keyword>
<keyword id="KW-0539">Nucleus</keyword>
<keyword id="KW-0597">Phosphoprotein</keyword>
<keyword id="KW-1267">Proteomics identification</keyword>
<keyword id="KW-1185">Reference proteome</keyword>
<keyword id="KW-0804">Transcription</keyword>
<keyword id="KW-0805">Transcription regulation</keyword>
<keyword id="KW-0857">Xeroderma pigmentosum</keyword>
<organism>
    <name type="scientific">Homo sapiens</name>
    <name type="common">Human</name>
    <dbReference type="NCBI Taxonomy" id="9606"/>
    <lineage>
        <taxon>Eukaryota</taxon>
        <taxon>Metazoa</taxon>
        <taxon>Chordata</taxon>
        <taxon>Craniata</taxon>
        <taxon>Vertebrata</taxon>
        <taxon>Euteleostomi</taxon>
        <taxon>Mammalia</taxon>
        <taxon>Eutheria</taxon>
        <taxon>Euarchontoglires</taxon>
        <taxon>Primates</taxon>
        <taxon>Haplorrhini</taxon>
        <taxon>Catarrhini</taxon>
        <taxon>Hominidae</taxon>
        <taxon>Homo</taxon>
    </lineage>
</organism>
<proteinExistence type="evidence at protein level"/>
<protein>
    <recommendedName>
        <fullName evidence="31">General transcription and DNA repair factor IIH helicase/translocase subunit XPB</fullName>
        <shortName>TFIIH subunit XPB</shortName>
        <ecNumber evidence="24 37">5.6.2.4</ecNumber>
    </recommendedName>
    <alternativeName>
        <fullName>Basic transcription factor 2 89 kDa subunit</fullName>
        <shortName>BTF2 p89</shortName>
    </alternativeName>
    <alternativeName>
        <fullName evidence="33">DNA 3'-5' helicase/translocase XPB</fullName>
    </alternativeName>
    <alternativeName>
        <fullName>DNA excision repair protein ERCC-3</fullName>
    </alternativeName>
    <alternativeName>
        <fullName evidence="30">DNA repair protein complementing XP-B cells</fullName>
    </alternativeName>
    <alternativeName>
        <fullName evidence="32">TFIIH basal transcription factor complex 89 kDa subunit</fullName>
        <shortName>TFIIH 89 kDa subunit</shortName>
        <shortName>TFIIH p89</shortName>
    </alternativeName>
    <alternativeName>
        <fullName>Xeroderma pigmentosum group B-complementing protein</fullName>
    </alternativeName>
</protein>
<reference key="1">
    <citation type="journal article" date="1990" name="Mol. Cell. Biol.">
        <title>Molecular cloning and biological characterization of the human excision repair gene ERCC-3.</title>
        <authorList>
            <person name="Weeda G."/>
            <person name="van Ham R.C.A."/>
            <person name="Masurel R."/>
            <person name="Westerveld A."/>
            <person name="Odijk H."/>
            <person name="de Wit J."/>
            <person name="Bootsma D."/>
            <person name="van der Eb A.J."/>
            <person name="Hoeijmakers J.H.J."/>
        </authorList>
    </citation>
    <scope>NUCLEOTIDE SEQUENCE [MRNA]</scope>
    <scope>FUNCTION IN NUCLEOTIDE EXCISON REPAIR</scope>
</reference>
<reference key="2">
    <citation type="journal article" date="1990" name="Cell">
        <title>A presumed DNA helicase encoded by ERCC-3 is involved in the human repair disorders Xeroderma pigmentosum and Cockayne's syndrome.</title>
        <authorList>
            <person name="Weeda G."/>
            <person name="van Ham R.C.A."/>
            <person name="Vermeulen W."/>
            <person name="Bootsma D."/>
            <person name="van der Eb A.J."/>
            <person name="Hoeijmakers J.H.J."/>
        </authorList>
    </citation>
    <scope>NUCLEOTIDE SEQUENCE [MRNA]</scope>
    <scope>INVOLVEMENT IN XP-B</scope>
</reference>
<reference key="3">
    <citation type="journal article" date="1991" name="Nucleic Acids Res.">
        <title>Structure and expression of the human XPBC/ERCC-3 gene involved in DNA repair disorders xeroderma pigmentosum and Cockayne's syndrome.</title>
        <authorList>
            <person name="Weeda G."/>
            <person name="Ma L."/>
            <person name="van Ham R.C.A."/>
            <person name="van der Eb A.J."/>
            <person name="Hoeijmakers J.H.J."/>
        </authorList>
    </citation>
    <scope>NUCLEOTIDE SEQUENCE [GENOMIC DNA]</scope>
</reference>
<reference key="4">
    <citation type="submission" date="2002-10" db="EMBL/GenBank/DDBJ databases">
        <authorList>
            <consortium name="NIEHS SNPs program"/>
        </authorList>
    </citation>
    <scope>NUCLEOTIDE SEQUENCE [GENOMIC DNA]</scope>
    <scope>VARIANTS LEU-704 AND PRO-735</scope>
</reference>
<reference key="5">
    <citation type="journal article" date="2005" name="Nature">
        <title>Generation and annotation of the DNA sequences of human chromosomes 2 and 4.</title>
        <authorList>
            <person name="Hillier L.W."/>
            <person name="Graves T.A."/>
            <person name="Fulton R.S."/>
            <person name="Fulton L.A."/>
            <person name="Pepin K.H."/>
            <person name="Minx P."/>
            <person name="Wagner-McPherson C."/>
            <person name="Layman D."/>
            <person name="Wylie K."/>
            <person name="Sekhon M."/>
            <person name="Becker M.C."/>
            <person name="Fewell G.A."/>
            <person name="Delehaunty K.D."/>
            <person name="Miner T.L."/>
            <person name="Nash W.E."/>
            <person name="Kremitzki C."/>
            <person name="Oddy L."/>
            <person name="Du H."/>
            <person name="Sun H."/>
            <person name="Bradshaw-Cordum H."/>
            <person name="Ali J."/>
            <person name="Carter J."/>
            <person name="Cordes M."/>
            <person name="Harris A."/>
            <person name="Isak A."/>
            <person name="van Brunt A."/>
            <person name="Nguyen C."/>
            <person name="Du F."/>
            <person name="Courtney L."/>
            <person name="Kalicki J."/>
            <person name="Ozersky P."/>
            <person name="Abbott S."/>
            <person name="Armstrong J."/>
            <person name="Belter E.A."/>
            <person name="Caruso L."/>
            <person name="Cedroni M."/>
            <person name="Cotton M."/>
            <person name="Davidson T."/>
            <person name="Desai A."/>
            <person name="Elliott G."/>
            <person name="Erb T."/>
            <person name="Fronick C."/>
            <person name="Gaige T."/>
            <person name="Haakenson W."/>
            <person name="Haglund K."/>
            <person name="Holmes A."/>
            <person name="Harkins R."/>
            <person name="Kim K."/>
            <person name="Kruchowski S.S."/>
            <person name="Strong C.M."/>
            <person name="Grewal N."/>
            <person name="Goyea E."/>
            <person name="Hou S."/>
            <person name="Levy A."/>
            <person name="Martinka S."/>
            <person name="Mead K."/>
            <person name="McLellan M.D."/>
            <person name="Meyer R."/>
            <person name="Randall-Maher J."/>
            <person name="Tomlinson C."/>
            <person name="Dauphin-Kohlberg S."/>
            <person name="Kozlowicz-Reilly A."/>
            <person name="Shah N."/>
            <person name="Swearengen-Shahid S."/>
            <person name="Snider J."/>
            <person name="Strong J.T."/>
            <person name="Thompson J."/>
            <person name="Yoakum M."/>
            <person name="Leonard S."/>
            <person name="Pearman C."/>
            <person name="Trani L."/>
            <person name="Radionenko M."/>
            <person name="Waligorski J.E."/>
            <person name="Wang C."/>
            <person name="Rock S.M."/>
            <person name="Tin-Wollam A.-M."/>
            <person name="Maupin R."/>
            <person name="Latreille P."/>
            <person name="Wendl M.C."/>
            <person name="Yang S.-P."/>
            <person name="Pohl C."/>
            <person name="Wallis J.W."/>
            <person name="Spieth J."/>
            <person name="Bieri T.A."/>
            <person name="Berkowicz N."/>
            <person name="Nelson J.O."/>
            <person name="Osborne J."/>
            <person name="Ding L."/>
            <person name="Meyer R."/>
            <person name="Sabo A."/>
            <person name="Shotland Y."/>
            <person name="Sinha P."/>
            <person name="Wohldmann P.E."/>
            <person name="Cook L.L."/>
            <person name="Hickenbotham M.T."/>
            <person name="Eldred J."/>
            <person name="Williams D."/>
            <person name="Jones T.A."/>
            <person name="She X."/>
            <person name="Ciccarelli F.D."/>
            <person name="Izaurralde E."/>
            <person name="Taylor J."/>
            <person name="Schmutz J."/>
            <person name="Myers R.M."/>
            <person name="Cox D.R."/>
            <person name="Huang X."/>
            <person name="McPherson J.D."/>
            <person name="Mardis E.R."/>
            <person name="Clifton S.W."/>
            <person name="Warren W.C."/>
            <person name="Chinwalla A.T."/>
            <person name="Eddy S.R."/>
            <person name="Marra M.A."/>
            <person name="Ovcharenko I."/>
            <person name="Furey T.S."/>
            <person name="Miller W."/>
            <person name="Eichler E.E."/>
            <person name="Bork P."/>
            <person name="Suyama M."/>
            <person name="Torrents D."/>
            <person name="Waterston R.H."/>
            <person name="Wilson R.K."/>
        </authorList>
    </citation>
    <scope>NUCLEOTIDE SEQUENCE [LARGE SCALE GENOMIC DNA]</scope>
</reference>
<reference key="6">
    <citation type="submission" date="2005-07" db="EMBL/GenBank/DDBJ databases">
        <authorList>
            <person name="Mural R.J."/>
            <person name="Istrail S."/>
            <person name="Sutton G.G."/>
            <person name="Florea L."/>
            <person name="Halpern A.L."/>
            <person name="Mobarry C.M."/>
            <person name="Lippert R."/>
            <person name="Walenz B."/>
            <person name="Shatkay H."/>
            <person name="Dew I."/>
            <person name="Miller J.R."/>
            <person name="Flanigan M.J."/>
            <person name="Edwards N.J."/>
            <person name="Bolanos R."/>
            <person name="Fasulo D."/>
            <person name="Halldorsson B.V."/>
            <person name="Hannenhalli S."/>
            <person name="Turner R."/>
            <person name="Yooseph S."/>
            <person name="Lu F."/>
            <person name="Nusskern D.R."/>
            <person name="Shue B.C."/>
            <person name="Zheng X.H."/>
            <person name="Zhong F."/>
            <person name="Delcher A.L."/>
            <person name="Huson D.H."/>
            <person name="Kravitz S.A."/>
            <person name="Mouchard L."/>
            <person name="Reinert K."/>
            <person name="Remington K.A."/>
            <person name="Clark A.G."/>
            <person name="Waterman M.S."/>
            <person name="Eichler E.E."/>
            <person name="Adams M.D."/>
            <person name="Hunkapiller M.W."/>
            <person name="Myers E.W."/>
            <person name="Venter J.C."/>
        </authorList>
    </citation>
    <scope>NUCLEOTIDE SEQUENCE [LARGE SCALE GENOMIC DNA]</scope>
</reference>
<reference key="7">
    <citation type="journal article" date="2004" name="Genome Res.">
        <title>The status, quality, and expansion of the NIH full-length cDNA project: the Mammalian Gene Collection (MGC).</title>
        <authorList>
            <consortium name="The MGC Project Team"/>
        </authorList>
    </citation>
    <scope>NUCLEOTIDE SEQUENCE [LARGE SCALE MRNA]</scope>
    <source>
        <tissue>Placenta</tissue>
    </source>
</reference>
<reference key="8">
    <citation type="journal article" date="1993" name="Science">
        <title>DNA repair helicase: a component of BTF2 (TFIIH) basic transcription factor.</title>
        <authorList>
            <person name="Schaeffer L."/>
            <person name="Roy R."/>
            <person name="Humbert S."/>
            <person name="Moncollin V."/>
            <person name="Vermeulen W."/>
            <person name="Hoeijmakers J.H."/>
            <person name="Chambon P."/>
            <person name="Egly J.M."/>
        </authorList>
    </citation>
    <scope>FUNCTION IN TRANSCRIPTION</scope>
    <scope>FUNCTION AS A PROBABLE 3'-5' HELICASE</scope>
</reference>
<reference key="9">
    <citation type="journal article" date="1994" name="EMBO J.">
        <title>Correction of xeroderma pigmentosum repair defect by basal transcription factor BTF2 (TFIIH).</title>
        <authorList>
            <person name="van Vuuren A.J."/>
            <person name="Vermeulen W."/>
            <person name="Ma L."/>
            <person name="Weeda G."/>
            <person name="Appeldoorn E."/>
            <person name="Jaspers N.G.J."/>
            <person name="van der Eb A.J."/>
            <person name="Bootsma D."/>
            <person name="Hoeijmakers J.H.J."/>
            <person name="Humbert S."/>
            <person name="Schaeffer L."/>
            <person name="Egly J.-M."/>
        </authorList>
    </citation>
    <scope>FUNCTION IN TRANSCRIPTION</scope>
    <scope>FUNCTION IN EXCISION REPAIR</scope>
    <scope>MUTAGENESIS OF LYS-346</scope>
</reference>
<reference key="10">
    <citation type="journal article" date="1995" name="Proc. Natl. Acad. Sci. U.S.A.">
        <title>The 62- and 80-kDa subunits of transcription factor IIH mediate the interaction with Epstein-Barr virus nuclear protein 2.</title>
        <authorList>
            <person name="Tong X."/>
            <person name="Drapkin R."/>
            <person name="Reinberg D."/>
            <person name="Kieff E."/>
        </authorList>
    </citation>
    <scope>INTERACTION WITH EBV EBNA2 (MICROBIAL INFECTION)</scope>
</reference>
<reference key="11">
    <citation type="journal article" date="1996" name="J. Biol. Chem.">
        <title>A 3' --&gt; 5' XPB helicase defect in repair/transcription factor TFIIH of xeroderma pigmentosum group B affects both DNA repair and transcription.</title>
        <authorList>
            <person name="Hwang J.R."/>
            <person name="Moncollin V."/>
            <person name="Vermeulen W."/>
            <person name="Seroz T."/>
            <person name="van Vuuren H."/>
            <person name="Hoeijmakers J.H."/>
            <person name="Egly J.M."/>
        </authorList>
    </citation>
    <scope>FUNCTION AS A 3'-5' HELICASE</scope>
    <scope>SUBUNIT</scope>
</reference>
<reference key="12">
    <citation type="journal article" date="1998" name="J. Biol. Chem.">
        <title>Immunoaffinity purification and functional characterization of human transcription factor IIH and RNA polymerase II from clonal cell lines that conditionally express epitope-tagged subunits of the multiprotein complexes.</title>
        <authorList>
            <person name="Kershnar E."/>
            <person name="Wu S.-Y."/>
            <person name="Chiang C.-M."/>
        </authorList>
    </citation>
    <scope>IDENTIFICATION IN THE TFIIH BASAL TRANSCRIPTION FACTOR</scope>
</reference>
<reference key="13">
    <citation type="journal article" date="1999" name="Mol. Cell">
        <title>Reconstitution of the transcription factor TFIIH: assignment of functions for the three enzymatic subunits, XPB, XPD, and cdk7.</title>
        <authorList>
            <person name="Tirode F."/>
            <person name="Busso D."/>
            <person name="Coin F."/>
            <person name="Egly J.-M."/>
        </authorList>
    </citation>
    <scope>FUNCTION AS A HELICASE</scope>
    <scope>SUBUNIT</scope>
    <scope>MUTAGENESIS OF LYS-346</scope>
</reference>
<reference key="14">
    <citation type="journal article" date="2000" name="Mol. Cell">
        <title>The FBP interacting repressor targets TFIIH to inhibit activated transcription.</title>
        <authorList>
            <person name="Liu J."/>
            <person name="He L."/>
            <person name="Collins I."/>
            <person name="Ge H."/>
            <person name="Libutti D."/>
            <person name="Li J."/>
            <person name="Egly J.-M."/>
            <person name="Levens D."/>
        </authorList>
    </citation>
    <scope>INTERACTION WITH PUF60</scope>
</reference>
<reference key="15">
    <citation type="journal article" date="2001" name="Cell">
        <title>Defective interplay of activators and repressors with TFIH in xeroderma pigmentosum.</title>
        <authorList>
            <person name="Liu J."/>
            <person name="Akoulitchev S."/>
            <person name="Weber A."/>
            <person name="Ge H."/>
            <person name="Chuikov S."/>
            <person name="Libutti D."/>
            <person name="Wang X.W."/>
            <person name="Conaway J.W."/>
            <person name="Harris C.C."/>
            <person name="Conaway R.C."/>
            <person name="Reinberg D."/>
            <person name="Levens D."/>
        </authorList>
    </citation>
    <scope>INTERACTION WITH PUF60</scope>
</reference>
<reference key="16">
    <citation type="journal article" date="2004" name="EMBO J.">
        <title>Phosphorylation of XPB helicase regulates TFIIH nucleotide excision repair activity.</title>
        <authorList>
            <person name="Coin F."/>
            <person name="Auriol J."/>
            <person name="Tapias A."/>
            <person name="Clivio P."/>
            <person name="Vermeulen W."/>
            <person name="Egly J.M."/>
        </authorList>
    </citation>
    <scope>FUNCTION</scope>
    <scope>PHOSPHORYLATION AT SER-751</scope>
    <scope>MUTAGENESIS OF SER-751</scope>
</reference>
<reference key="17">
    <citation type="journal article" date="2007" name="Mol. Cell">
        <title>Distinct roles for the XPB/p52 and XPD/p44 subcomplexes of TFIIH in damaged DNA opening during nucleotide excision repair.</title>
        <authorList>
            <person name="Coin F."/>
            <person name="Oksenych V."/>
            <person name="Egly J.M."/>
        </authorList>
    </citation>
    <scope>HELICASE ACTIVITY</scope>
    <scope>ATPASE ACTIVITY</scope>
    <scope>ACTIVITY REGULATION</scope>
    <scope>MUTAGENESIS OF LYS-346; THR-469 AND GLN-638</scope>
    <scope>VARIANT XP-B SER-99</scope>
    <scope>VARIANT TTD2 PRO-119</scope>
</reference>
<reference key="18">
    <citation type="journal article" date="1999" name="Hum. Mutat.">
        <title>A summary of mutations in the UV-sensitive disorders: xeroderma pigmentosum, Cockayne syndrome, and trichothiodystrophy.</title>
        <authorList>
            <person name="Cleaver J.E."/>
            <person name="Thompson L.H."/>
            <person name="Richardson A.S."/>
            <person name="States J.C."/>
        </authorList>
    </citation>
    <scope>REVIEW ON VARIANTS XP-B</scope>
</reference>
<reference key="19">
    <citation type="journal article" date="2009" name="J. Biol. Chem.">
        <title>MCAF1/AM is involved in Sp1-mediated maintenance of cancer-associated telomerase activity.</title>
        <authorList>
            <person name="Liu L."/>
            <person name="Ishihara K."/>
            <person name="Ichimura T."/>
            <person name="Fujita N."/>
            <person name="Hino S."/>
            <person name="Tomita S."/>
            <person name="Watanabe S."/>
            <person name="Saitoh N."/>
            <person name="Ito T."/>
            <person name="Nakao M."/>
        </authorList>
    </citation>
    <scope>INTERACTION WITH ATF7IP</scope>
</reference>
<reference key="20">
    <citation type="journal article" date="2013" name="J. Proteome Res.">
        <title>Toward a comprehensive characterization of a human cancer cell phosphoproteome.</title>
        <authorList>
            <person name="Zhou H."/>
            <person name="Di Palma S."/>
            <person name="Preisinger C."/>
            <person name="Peng M."/>
            <person name="Polat A.N."/>
            <person name="Heck A.J."/>
            <person name="Mohammed S."/>
        </authorList>
    </citation>
    <scope>PHOSPHORYLATION [LARGE SCALE ANALYSIS] AT SER-686</scope>
    <scope>IDENTIFICATION BY MASS SPECTROMETRY [LARGE SCALE ANALYSIS]</scope>
    <source>
        <tissue>Erythroleukemia</tissue>
    </source>
</reference>
<reference key="21">
    <citation type="journal article" date="2014" name="J. Proteomics">
        <title>An enzyme assisted RP-RPLC approach for in-depth analysis of human liver phosphoproteome.</title>
        <authorList>
            <person name="Bian Y."/>
            <person name="Song C."/>
            <person name="Cheng K."/>
            <person name="Dong M."/>
            <person name="Wang F."/>
            <person name="Huang J."/>
            <person name="Sun D."/>
            <person name="Wang L."/>
            <person name="Ye M."/>
            <person name="Zou H."/>
        </authorList>
    </citation>
    <scope>IDENTIFICATION BY MASS SPECTROMETRY [LARGE SCALE ANALYSIS]</scope>
    <source>
        <tissue>Liver</tissue>
    </source>
</reference>
<reference key="22">
    <citation type="journal article" date="2019" name="Nat. Commun.">
        <title>Functional interplay between TFIIH and KAT2A regulates higher-order chromatin structure and class II gene expression.</title>
        <authorList>
            <person name="Sandoz J."/>
            <person name="Nagy Z."/>
            <person name="Catez P."/>
            <person name="Caliskan G."/>
            <person name="Geny S."/>
            <person name="Renaud J.B."/>
            <person name="Concordet J.P."/>
            <person name="Poterszman A."/>
            <person name="Tora L."/>
            <person name="Egly J.M."/>
            <person name="Le May N."/>
            <person name="Coin F."/>
        </authorList>
    </citation>
    <scope>FUNCTION</scope>
    <scope>INTERACTION WITH KAT2A</scope>
</reference>
<reference evidence="40" key="23">
    <citation type="journal article" date="2013" name="Acta Crystallogr. D">
        <title>Structure of the C-terminal half of human XPB helicase and the impact of the disease-causing mutation XP11BE.</title>
        <authorList>
            <person name="Hilario E."/>
            <person name="Li Y."/>
            <person name="Nobumori Y."/>
            <person name="Liu X."/>
            <person name="Fan L."/>
        </authorList>
    </citation>
    <scope>X-RAY CRYSTALLOGRAPHY (1.8 ANGSTROMS) OF 494-782</scope>
    <scope>MUTAGENESIS OF LYS-782</scope>
</reference>
<reference evidence="41 42 43 44 45" key="24">
    <citation type="journal article" date="2016" name="Nature">
        <title>Near-atomic resolution visualization of human transcription promoter opening.</title>
        <authorList>
            <person name="He Y."/>
            <person name="Yan C."/>
            <person name="Fang J."/>
            <person name="Inouye C."/>
            <person name="Tjian R."/>
            <person name="Ivanov I."/>
            <person name="Nogales E."/>
        </authorList>
    </citation>
    <scope>STRUCTURE BY ELECTRON MICROSCOPY (3.90 ANGSTROMS) OF TRANSCRIPTION PRE-INITIATION COMPLEX</scope>
    <scope>SUBUNIT</scope>
</reference>
<reference evidence="46" key="25">
    <citation type="journal article" date="2019" name="Nat. Commun.">
        <title>Structural basis of TFIIH activation for nucleotide excision repair.</title>
        <authorList>
            <person name="Kokic G."/>
            <person name="Chernev A."/>
            <person name="Tegunov D."/>
            <person name="Dienemann C."/>
            <person name="Urlaub H."/>
            <person name="Cramer P."/>
        </authorList>
    </citation>
    <scope>STRUCTURE BY ELECTRON MICROSCOPY (3.50 ANGSTROMS) OF NUCLEOTIDE EXCISION REPAIR INTERMEDIATE COMPLEX WITH XPA AND DNA SUBSTRATE</scope>
    <scope>ACTIVITY REGULATION</scope>
</reference>
<reference evidence="47 48 49 50 51 52" key="26">
    <citation type="journal article" date="2021" name="Nature">
        <title>Structures of mammalian RNA polymerase II pre-initiation complexes.</title>
        <authorList>
            <person name="Aibara S."/>
            <person name="Schilbach S."/>
            <person name="Cramer P."/>
        </authorList>
    </citation>
    <scope>STRUCTURE BY ELECTRON MICROSCOPY (2.90 ANGSTROMS) OF PRE-INITIATION COMPLEXES WITH PIG POLYMERASE II</scope>
    <scope>FUNCTION</scope>
</reference>
<reference key="27">
    <citation type="journal article" date="1994" name="Am. J. Hum. Genet.">
        <title>Clinical heterogeneity within xeroderma pigmentosum associated with mutations in the DNA repair and transcription gene ERCC3.</title>
        <authorList>
            <person name="Vermeulen W."/>
            <person name="Scott R.J."/>
            <person name="Rodgers S."/>
            <person name="Mueller H.J."/>
            <person name="Cole J."/>
            <person name="Arlett C.F."/>
            <person name="Kleijer W.J."/>
            <person name="Bootsma D."/>
            <person name="Hoeijmakers J.H.J."/>
            <person name="Weeda G."/>
        </authorList>
    </citation>
    <scope>VARIANT XP-B SER-99</scope>
</reference>
<reference key="28">
    <citation type="journal article" date="1997" name="Am. J. Hum. Genet.">
        <title>A mutation in the XPB/ERCC3 DNA repair transcription gene, associated with trichothiodystrophy.</title>
        <authorList>
            <person name="Weeda G."/>
            <person name="Eveno E."/>
            <person name="Donker I."/>
            <person name="Vermeulen W."/>
            <person name="Chevallier-Lagente O."/>
            <person name="Taieb A."/>
            <person name="Stary A."/>
            <person name="Hoeijmakers J.H.J."/>
            <person name="Mezzina M."/>
            <person name="Sarasin A."/>
        </authorList>
    </citation>
    <scope>VARIANT TTD2 PRO-119</scope>
</reference>
<reference key="29">
    <citation type="journal article" date="2000" name="Hum. Mutat.">
        <title>Identification of four single nucleotide polymorphisms in DNA repair genes: XPA and XPB (ERCC3) in Polish population.</title>
        <authorList>
            <person name="Butkiewicz D."/>
            <person name="Rusin M."/>
            <person name="Harris C.C."/>
            <person name="Chorazy M."/>
        </authorList>
    </citation>
    <scope>VARIANTS ARG-117 AND CYS-402</scope>
</reference>
<reference key="30">
    <citation type="journal article" date="2006" name="Hum. Mutat.">
        <title>Phenotypic heterogeneity in the XPB DNA helicase gene (ERCC3): xeroderma pigmentosum without and with Cockayne syndrome.</title>
        <authorList>
            <person name="Oh K.-S."/>
            <person name="Khan S.G."/>
            <person name="Jaspers N.G.J."/>
            <person name="Raams A."/>
            <person name="Ueda T."/>
            <person name="Lehmann A."/>
            <person name="Friedmann P.S."/>
            <person name="Emmert S."/>
            <person name="Gratchev A."/>
            <person name="Lachlan K."/>
            <person name="Lucassan A."/>
            <person name="Baker C.C."/>
            <person name="Kraemer K.H."/>
        </authorList>
    </citation>
    <scope>VARIANT XP-B SER-99</scope>
</reference>
<reference key="31">
    <citation type="journal article" date="2006" name="Science">
        <title>The consensus coding sequences of human breast and colorectal cancers.</title>
        <authorList>
            <person name="Sjoeblom T."/>
            <person name="Jones S."/>
            <person name="Wood L.D."/>
            <person name="Parsons D.W."/>
            <person name="Lin J."/>
            <person name="Barber T.D."/>
            <person name="Mandelker D."/>
            <person name="Leary R.J."/>
            <person name="Ptak J."/>
            <person name="Silliman N."/>
            <person name="Szabo S."/>
            <person name="Buckhaults P."/>
            <person name="Farrell C."/>
            <person name="Meeh P."/>
            <person name="Markowitz S.D."/>
            <person name="Willis J."/>
            <person name="Dawson D."/>
            <person name="Willson J.K.V."/>
            <person name="Gazdar A.F."/>
            <person name="Hartigan J."/>
            <person name="Wu L."/>
            <person name="Liu C."/>
            <person name="Parmigiani G."/>
            <person name="Park B.H."/>
            <person name="Bachman K.E."/>
            <person name="Papadopoulos N."/>
            <person name="Vogelstein B."/>
            <person name="Kinzler K.W."/>
            <person name="Velculescu V.E."/>
        </authorList>
    </citation>
    <scope>VARIANT [LARGE SCALE ANALYSIS] GLN-418</scope>
</reference>
<comment type="function">
    <text evidence="5 13 18 19 20 21 22 24 37">ATP-dependent 3'-5' DNA helicase/translocase (PubMed:17466626, PubMed:27193682, PubMed:33902107, PubMed:8465201, PubMed:8663148). Binds dsDNA rather than ssDNA, unzipping it in a translocase rather than classical helicase activity (PubMed:27193682, PubMed:33902107). Component of the general transcription and DNA repair factor IIH (TFIIH) core complex (PubMed:10024882, PubMed:17466626, PubMed:8157004, PubMed:8465201). When complexed to CDK-activating kinase (CAK), involved in RNA transcription by RNA polymerase II. The ATPase activity of XPB/ERCC3, but not its helicase activity, is required for DNA opening; it may wrap around the damaged DNA wedging it open, causing localized melting that allows XPD/ERCC2 helicase to anchor (PubMed:10024882, PubMed:17466626). In transcription, TFIIH has an essential role in transcription initiation (PubMed:30894545, PubMed:8157004). When the pre-initiation complex (PIC) has been established, TFIIH is required for promoter opening and promoter escape (PubMed:8157004). The ATP-dependent helicase activity of XPB/ERCC3 is required for promoter opening and promoter escape (PubMed:10024882). In transcription pre-initiation complexes induces and propagates a DNA twist to open DNA (PubMed:27193682, PubMed:33902107). Also involved in transcription-coupled nucleotide excision repair (NER) of damaged DNA (PubMed:17466626, PubMed:2111438, PubMed:8157004). In NER, TFIIH acts by opening DNA around the lesion to allow the excision of the damaged oligonucleotide and its replacement by a new DNA fragment. The structure of the TFIIH transcription complex differs from the NER-TFIIH complex; large movements by XPD/ERCC2 and XPB/ERCC3 are stabilized by XPA (PubMed:31253769, PubMed:33902107). XPA retains XPB/ERCC3 at the 5' end of a DNA bubble (mimicking DNA damage) (PubMed:31253769).</text>
</comment>
<comment type="catalytic activity">
    <reaction evidence="24 37">
        <text>Couples ATP hydrolysis with the unwinding of duplex DNA by translocating in the 3'-5' direction.</text>
        <dbReference type="EC" id="5.6.2.4"/>
    </reaction>
</comment>
<comment type="catalytic activity">
    <reaction evidence="13 24 37">
        <text>ATP + H2O = ADP + phosphate + H(+)</text>
        <dbReference type="Rhea" id="RHEA:13065"/>
        <dbReference type="ChEBI" id="CHEBI:15377"/>
        <dbReference type="ChEBI" id="CHEBI:15378"/>
        <dbReference type="ChEBI" id="CHEBI:30616"/>
        <dbReference type="ChEBI" id="CHEBI:43474"/>
        <dbReference type="ChEBI" id="CHEBI:456216"/>
        <dbReference type="EC" id="5.6.2.4"/>
    </reaction>
</comment>
<comment type="activity regulation">
    <text evidence="10 13 19">Phosphorylation on Ser-751 by CK2 controls the 5'-excision activity of ERCC1-XPF endonuclease; phosphorylated protein inhibits the excision activity and thus NER (PubMed:15549133). ATPase activity is stimulated by TFIIH subunit p52 (GTF2H4) (PubMed:17466626). DNA translocase activity by this subunit in TFIIH is stimulated by XPA, ERCC5/XPG and XFP plus ERCC1; translocase activity is sensitive to triptolide which targets this enzyme (PubMed:31253769).</text>
</comment>
<comment type="subunit">
    <text evidence="8 9 14 17 18 24 26">Component of the 7-subunit TFIIH core complex composed of XPB/ERCC3, XPD/ERCC2, GTF2H1, GTF2H2, GTF2H3, GTF2H4 and GTF2H5, which is active in NER. The core complex associates with the 3-subunit CDK-activating kinase (CAK) module composed of CCNH/cyclin H, CDK7 and MNAT1 to form the 10-subunit holoenzyme (holo-TFIIH) active in transcription (PubMed:8663148, PubMed:9852112). Interacts with PUF60 (PubMed:10882074, PubMed:11239393). Interacts with ATF7IP (PubMed:19106100). Interacts with KAT2A; leading to KAT2A recruitment to promoters and acetylation of histones (PubMed:30894545). Part of TBP-based Pol II pre-initiation complex (PIC), in which Pol II core assembles with general transcription factors and other specific initiation factors including GTF2E1, GTF2E2, GTF2F1, GTF2F2, TCEA1, ERCC2, ERCC3, GTF2H2, GTF2H3, GTF2H4, GTF2H5, GTF2A1, GTF2A2, GTF2B and TBP; this large multi-subunit PIC complex mediates DNA unwinding and targets Pol II core to the transcription start site where the first phosphodiester bond forms.</text>
</comment>
<comment type="subunit">
    <text evidence="21">(Microbial infection) Interacts with Epstein-Barr virus EBNA2.</text>
</comment>
<comment type="interaction">
    <interactant intactId="EBI-1183307">
        <id>P19447</id>
    </interactant>
    <interactant intactId="EBI-10173507">
        <id>Q6UY14-3</id>
        <label>ADAMTSL4</label>
    </interactant>
    <organismsDiffer>false</organismsDiffer>
    <experiments>3</experiments>
</comment>
<comment type="interaction">
    <interactant intactId="EBI-1183307">
        <id>P19447</id>
    </interactant>
    <interactant intactId="EBI-2548012">
        <id>Q9H2G9</id>
        <label>BLZF1</label>
    </interactant>
    <organismsDiffer>false</organismsDiffer>
    <experiments>3</experiments>
</comment>
<comment type="interaction">
    <interactant intactId="EBI-1183307">
        <id>P19447</id>
    </interactant>
    <interactant intactId="EBI-739624">
        <id>Q8NHQ1</id>
        <label>CEP70</label>
    </interactant>
    <organismsDiffer>false</organismsDiffer>
    <experiments>3</experiments>
</comment>
<comment type="interaction">
    <interactant intactId="EBI-1183307">
        <id>P19447</id>
    </interactant>
    <interactant intactId="EBI-742887">
        <id>Q8TAP6</id>
        <label>CEP76</label>
    </interactant>
    <organismsDiffer>false</organismsDiffer>
    <experiments>3</experiments>
</comment>
<comment type="interaction">
    <interactant intactId="EBI-1183307">
        <id>P19447</id>
    </interactant>
    <interactant intactId="EBI-6380590">
        <id>P18074</id>
        <label>ERCC2</label>
    </interactant>
    <organismsDiffer>false</organismsDiffer>
    <experiments>5</experiments>
</comment>
<comment type="interaction">
    <interactant intactId="EBI-1183307">
        <id>P19447</id>
    </interactant>
    <interactant intactId="EBI-11022345">
        <id>P51114-2</id>
        <label>FXR1</label>
    </interactant>
    <organismsDiffer>false</organismsDiffer>
    <experiments>3</experiments>
</comment>
<comment type="interaction">
    <interactant intactId="EBI-1183307">
        <id>P19447</id>
    </interactant>
    <interactant intactId="EBI-6380438">
        <id>Q6ZYL4</id>
        <label>GTF2H5</label>
    </interactant>
    <organismsDiffer>false</organismsDiffer>
    <experiments>6</experiments>
</comment>
<comment type="interaction">
    <interactant intactId="EBI-1183307">
        <id>P19447</id>
    </interactant>
    <interactant intactId="EBI-358297">
        <id>O00505</id>
        <label>KPNA3</label>
    </interactant>
    <organismsDiffer>false</organismsDiffer>
    <experiments>4</experiments>
</comment>
<comment type="interaction">
    <interactant intactId="EBI-1183307">
        <id>P19447</id>
    </interactant>
    <interactant intactId="EBI-716006">
        <id>Q9Y5V3</id>
        <label>MAGED1</label>
    </interactant>
    <organismsDiffer>false</organismsDiffer>
    <experiments>3</experiments>
</comment>
<comment type="interaction">
    <interactant intactId="EBI-1183307">
        <id>P19447</id>
    </interactant>
    <interactant intactId="EBI-357745">
        <id>P62195</id>
        <label>PSMC5</label>
    </interactant>
    <organismsDiffer>false</organismsDiffer>
    <experiments>4</experiments>
</comment>
<comment type="interaction">
    <interactant intactId="EBI-1183307">
        <id>P19447</id>
    </interactant>
    <interactant intactId="EBI-954531">
        <id>P54727</id>
        <label>RAD23B</label>
    </interactant>
    <organismsDiffer>false</organismsDiffer>
    <experiments>2</experiments>
</comment>
<comment type="interaction">
    <interactant intactId="EBI-1183307">
        <id>P19447</id>
    </interactant>
    <interactant intactId="EBI-1378139">
        <id>Q9HAT0</id>
        <label>ROPN1</label>
    </interactant>
    <organismsDiffer>false</organismsDiffer>
    <experiments>3</experiments>
</comment>
<comment type="interaction">
    <interactant intactId="EBI-1183307">
        <id>P19447</id>
    </interactant>
    <interactant intactId="EBI-632715">
        <id>Q13573</id>
        <label>SNW1</label>
    </interactant>
    <organismsDiffer>false</organismsDiffer>
    <experiments>3</experiments>
</comment>
<comment type="interaction">
    <interactant intactId="EBI-1183307">
        <id>P19447</id>
    </interactant>
    <interactant intactId="EBI-2820256">
        <id>Q14142</id>
        <label>TRIM14</label>
    </interactant>
    <organismsDiffer>false</organismsDiffer>
    <experiments>3</experiments>
</comment>
<comment type="interaction">
    <interactant intactId="EBI-1183307">
        <id>P19447</id>
    </interactant>
    <interactant intactId="EBI-719493">
        <id>P14373</id>
        <label>TRIM27</label>
    </interactant>
    <organismsDiffer>false</organismsDiffer>
    <experiments>4</experiments>
</comment>
<comment type="interaction">
    <interactant intactId="EBI-1183307">
        <id>P19447</id>
    </interactant>
    <interactant intactId="EBI-517127">
        <id>P98170</id>
        <label>XIAP</label>
    </interactant>
    <organismsDiffer>false</organismsDiffer>
    <experiments>4</experiments>
</comment>
<comment type="interaction">
    <interactant intactId="EBI-1183307">
        <id>P19447</id>
    </interactant>
    <interactant intactId="EBI-372610">
        <id>Q01831</id>
        <label>XPC</label>
    </interactant>
    <organismsDiffer>false</organismsDiffer>
    <experiments>3</experiments>
</comment>
<comment type="interaction">
    <interactant intactId="EBI-1183307">
        <id>P19447</id>
    </interactant>
    <interactant intactId="EBI-357713">
        <id>P62196</id>
        <label>Psmc5</label>
    </interactant>
    <organismsDiffer>true</organismsDiffer>
    <experiments>6</experiments>
</comment>
<comment type="subcellular location">
    <subcellularLocation>
        <location>Nucleus</location>
    </subcellularLocation>
</comment>
<comment type="PTM">
    <text evidence="10">Phosphorylation on Ser-751 by CK2 controls the 5'-excision activity of ERCC1-XPF endonuclease; phosphorylated protein inhibits the excision activity and thus NER (PubMed:15549133). Dephosphorylation reactivates the 5'-excision step (PubMed:15549133). Phosphorylation has no effect on transcription or the 3'-5' helicase activity (PubMed:15549133).</text>
</comment>
<comment type="disease" evidence="6 11 13 18 23">
    <disease id="DI-01156">
        <name>Xeroderma pigmentosum complementation group B</name>
        <acronym>XP-B</acronym>
        <description>An autosomal recessive pigmentary skin disorder characterized by solar hypersensitivity of the skin, high predisposition for developing cancers on areas exposed to sunlight and, in some cases, neurological abnormalities. The skin develops marked freckling and other pigmentation abnormalities. Some XP-B patients present features of Cockayne syndrome, including cachectic dwarfism, pigmentary retinopathy, ataxia, decreased nerve conduction velocities. The phenotype combining xeroderma pigmentosum and Cockayne syndrome traits is referred to as XP-CS complex.</description>
        <dbReference type="MIM" id="610651"/>
    </disease>
    <text>The disease is caused by variants affecting the gene represented in this entry.</text>
</comment>
<comment type="disease" evidence="13 25">
    <disease id="DI-04433">
        <name>Trichothiodystrophy 2, photosensitive</name>
        <acronym>TTD2</acronym>
        <description>A form of trichothiodystrophy, an autosomal recessive disease characterized by sulfur-deficient brittle hair and multisystem variable abnormalities. The spectrum of clinical features varies from mild disease with only hair involvement to severe disease with cutaneous, neurologic and profound developmental defects. Ichthyosis, intellectual and developmental disabilities, decreased fertility, abnormal characteristics at birth, ocular abnormalities, short stature, and infections are common manifestations. There are both photosensitive and non-photosensitive forms of the disorder.</description>
        <dbReference type="MIM" id="616390"/>
    </disease>
    <text>The disease is caused by variants affecting the gene represented in this entry.</text>
</comment>
<comment type="miscellaneous">
    <text evidence="10 15 24">The TFIIH core complex from patient XP11BE (a patient with XP/CS who has a C-terminal splice-site frameshift from residue 741 in this protein) reconstitutes in vitro transcription about 30% less well than wild-type but does not restore NER in vitro or in vivo (PubMed:8663148). The XP11BE TFIIH complex has all the subunits in the same stoichiometry as wild-type (PubMed:8663148). Purified mutant protein has very weak 3'-5' helicase and ATPase activities (PubMed:8663148). In another paper the mutant protein has wild-type 3'-5' helicase activity (PubMed:15549133). The mutation is recessive to wild-type (PubMed:2167179, PubMed:8663148). XPB/ERCC3 is not phosphorylated in vitro in this mutant, and does not restore transcription in XPB/ERCC3-defective cells (PubMed:15549133).</text>
</comment>
<comment type="miscellaneous">
    <text evidence="35 36">Conventional DNA helicases unwind DNA by binding to a ssDNA overhang of dsDNA and then translocating on this strand with cycles of ATP binding and hydrolysis to 'unzip' the dsDNA. XPB/ERCC3 is believed to be an unconventional DNA helicase principally because it translocates in a 3'-5' direction along dsDNA instead of ssDNA, thus it is referred to as a DNA translocase (PubMed:27193682, PubMed:33902107).</text>
</comment>
<comment type="similarity">
    <text evidence="33">Belongs to the helicase family. RAD25/XPB subfamily.</text>
</comment>
<comment type="online information" name="Atlas of Genetics and Cytogenetics in Oncology and Haematology">
    <link uri="https://atlasgeneticsoncology.org/gene/296/XPB"/>
</comment>
<feature type="chain" id="PRO_0000101987" description="General transcription and DNA repair factor IIH helicase/translocase subunit XPB">
    <location>
        <begin position="1"/>
        <end position="782"/>
    </location>
</feature>
<feature type="domain" description="Helicase ATP-binding" evidence="2">
    <location>
        <begin position="327"/>
        <end position="488"/>
    </location>
</feature>
<feature type="domain" description="Helicase C-terminal" evidence="3">
    <location>
        <begin position="542"/>
        <end position="702"/>
    </location>
</feature>
<feature type="region of interest" description="Disordered" evidence="4">
    <location>
        <begin position="1"/>
        <end position="51"/>
    </location>
</feature>
<feature type="region of interest" description="Disordered" evidence="4">
    <location>
        <begin position="218"/>
        <end position="241"/>
    </location>
</feature>
<feature type="short sequence motif" description="Nuclear localization signal" evidence="1">
    <location>
        <begin position="6"/>
        <end position="18"/>
    </location>
</feature>
<feature type="short sequence motif" description="DEVH box">
    <location>
        <begin position="441"/>
        <end position="444"/>
    </location>
</feature>
<feature type="compositionally biased region" description="Basic and acidic residues" evidence="4">
    <location>
        <begin position="1"/>
        <end position="11"/>
    </location>
</feature>
<feature type="compositionally biased region" description="Acidic residues" evidence="4">
    <location>
        <begin position="21"/>
        <end position="30"/>
    </location>
</feature>
<feature type="compositionally biased region" description="Polar residues" evidence="4">
    <location>
        <begin position="218"/>
        <end position="236"/>
    </location>
</feature>
<feature type="binding site" evidence="2 36 38 39">
    <location>
        <begin position="340"/>
        <end position="347"/>
    </location>
    <ligand>
        <name>ATP</name>
        <dbReference type="ChEBI" id="CHEBI:30616"/>
    </ligand>
</feature>
<feature type="binding site" evidence="36 38 39">
    <location>
        <position position="642"/>
    </location>
    <ligand>
        <name>ATP</name>
        <dbReference type="ChEBI" id="CHEBI:30616"/>
    </ligand>
</feature>
<feature type="binding site" evidence="36 38 39">
    <location>
        <position position="645"/>
    </location>
    <ligand>
        <name>ATP</name>
        <dbReference type="ChEBI" id="CHEBI:30616"/>
    </ligand>
</feature>
<feature type="modified residue" description="Phosphoserine" evidence="53">
    <location>
        <position position="686"/>
    </location>
</feature>
<feature type="modified residue" description="Phosphoserine; by CK2" evidence="34">
    <location>
        <position position="751"/>
    </location>
</feature>
<feature type="sequence variant" id="VAR_003632" description="In XP-B; combined with features of Cockayne syndrome; mild; reduced interaction with GTF2H4/p52 leads to low ATPase stimulation and decreased DNA duplex unwinding by TFIIH; does not alter helicase activity; does not alter TFIIH recruitment to DNA damage; XPA is not recruited to DNA damage by TFIIH; nearly wild-type transcription activity by TFIIH; dbSNP:rs121913045." evidence="11 13 23">
    <original>F</original>
    <variation>S</variation>
    <location>
        <position position="99"/>
    </location>
</feature>
<feature type="sequence variant" id="VAR_014766" description="In dbSNP:rs1805161." evidence="7">
    <original>K</original>
    <variation>R</variation>
    <location>
        <position position="117"/>
    </location>
</feature>
<feature type="sequence variant" id="VAR_008186" description="In TTD2; mild; wild-type dual incision, opening around damaged DNA and transcription by TFIIH; dbSNP:rs121913046." evidence="13 25">
    <original>T</original>
    <variation>P</variation>
    <location>
        <position position="119"/>
    </location>
</feature>
<feature type="sequence variant" id="VAR_014767" description="In dbSNP:rs1805162." evidence="7">
    <original>G</original>
    <variation>C</variation>
    <location>
        <position position="402"/>
    </location>
</feature>
<feature type="sequence variant" id="VAR_035942" description="In a breast cancer sample; somatic mutation." evidence="12">
    <original>K</original>
    <variation>Q</variation>
    <location>
        <position position="418"/>
    </location>
</feature>
<feature type="sequence variant" id="VAR_017294" description="In dbSNP:rs4150521." evidence="27">
    <original>S</original>
    <variation>L</variation>
    <location>
        <position position="704"/>
    </location>
</feature>
<feature type="sequence variant" id="VAR_014344" description="In dbSNP:rs4150522." evidence="27">
    <original>S</original>
    <variation>P</variation>
    <location>
        <position position="735"/>
    </location>
</feature>
<feature type="mutagenesis site" description="Dominant-negative effect on transcription and NER, induces chromatin collapse, probably has no ATPase activity. No transcriptional activity of the reconstituted TFIIH complex. TFHHI is inactive in DNA repair and in transcription." evidence="5 13 22">
    <original>K</original>
    <variation>R</variation>
    <location>
        <position position="346"/>
    </location>
</feature>
<feature type="mutagenesis site" description="Very low 3'-5' helicase activity, wild-type ATPase activity, opens damaged DNA, nearly wild-type NER activity in vivo, 50% decreased transcription in vitro." evidence="13">
    <original>T</original>
    <variation>A</variation>
    <location>
        <position position="469"/>
    </location>
</feature>
<feature type="mutagenesis site" description="Very low 3'-5' helicase activity, wild-type ATPase activity, wild-type damaged DNA removal, 80% decreased transcription (all in vitro)." evidence="13">
    <original>Q</original>
    <variation>A</variation>
    <location>
        <position position="638"/>
    </location>
</feature>
<feature type="mutagenesis site" description="Restores NER in XPB/ERCC3-defective cells, does not inhibit 5'-incision by ERCC1-XPF, wild-type transcription and helicase activities." evidence="10">
    <original>S</original>
    <variation>A</variation>
    <location>
        <position position="751"/>
    </location>
</feature>
<feature type="mutagenesis site" description="Does not restore NER in XPB/ERCC3-defective cells, inhibits 5'-incision by ERCC1-XPF, wild-type transcription and helicase activities." evidence="10">
    <original>S</original>
    <variation>E</variation>
    <location>
        <position position="751"/>
    </location>
</feature>
<feature type="mutagenesis site" description="Impairs protein folding." evidence="16">
    <location>
        <position position="782"/>
    </location>
</feature>
<feature type="strand" evidence="58">
    <location>
        <begin position="55"/>
        <end position="60"/>
    </location>
</feature>
<feature type="turn" evidence="57">
    <location>
        <begin position="62"/>
        <end position="64"/>
    </location>
</feature>
<feature type="turn" evidence="57">
    <location>
        <begin position="69"/>
        <end position="73"/>
    </location>
</feature>
<feature type="strand" evidence="57">
    <location>
        <begin position="76"/>
        <end position="78"/>
    </location>
</feature>
<feature type="strand" evidence="57">
    <location>
        <begin position="82"/>
        <end position="87"/>
    </location>
</feature>
<feature type="helix" evidence="57">
    <location>
        <begin position="93"/>
        <end position="103"/>
    </location>
</feature>
<feature type="strand" evidence="57">
    <location>
        <begin position="104"/>
        <end position="108"/>
    </location>
</feature>
<feature type="strand" evidence="57">
    <location>
        <begin position="111"/>
        <end position="117"/>
    </location>
</feature>
<feature type="helix" evidence="57">
    <location>
        <begin position="120"/>
        <end position="129"/>
    </location>
</feature>
<feature type="helix" evidence="57">
    <location>
        <begin position="133"/>
        <end position="143"/>
    </location>
</feature>
<feature type="strand" evidence="57">
    <location>
        <begin position="144"/>
        <end position="146"/>
    </location>
</feature>
<feature type="helix" evidence="57">
    <location>
        <begin position="150"/>
        <end position="158"/>
    </location>
</feature>
<feature type="turn" evidence="57">
    <location>
        <begin position="159"/>
        <end position="162"/>
    </location>
</feature>
<feature type="strand" evidence="57">
    <location>
        <begin position="163"/>
        <end position="171"/>
    </location>
</feature>
<feature type="strand" evidence="57">
    <location>
        <begin position="174"/>
        <end position="180"/>
    </location>
</feature>
<feature type="helix" evidence="57">
    <location>
        <begin position="182"/>
        <end position="190"/>
    </location>
</feature>
<feature type="helix" evidence="57">
    <location>
        <begin position="192"/>
        <end position="196"/>
    </location>
</feature>
<feature type="helix" evidence="58">
    <location>
        <begin position="200"/>
        <end position="202"/>
    </location>
</feature>
<feature type="strand" evidence="57">
    <location>
        <begin position="267"/>
        <end position="272"/>
    </location>
</feature>
<feature type="helix" evidence="57">
    <location>
        <begin position="274"/>
        <end position="276"/>
    </location>
</feature>
<feature type="helix" evidence="57">
    <location>
        <begin position="277"/>
        <end position="286"/>
    </location>
</feature>
<feature type="helix" evidence="57">
    <location>
        <begin position="297"/>
        <end position="299"/>
    </location>
</feature>
<feature type="strand" evidence="58">
    <location>
        <begin position="301"/>
        <end position="303"/>
    </location>
</feature>
<feature type="helix" evidence="57">
    <location>
        <begin position="318"/>
        <end position="327"/>
    </location>
</feature>
<feature type="strand" evidence="57">
    <location>
        <begin position="329"/>
        <end position="334"/>
    </location>
</feature>
<feature type="strand" evidence="57">
    <location>
        <begin position="336"/>
        <end position="339"/>
    </location>
</feature>
<feature type="strand" evidence="58">
    <location>
        <begin position="342"/>
        <end position="344"/>
    </location>
</feature>
<feature type="helix" evidence="57">
    <location>
        <begin position="346"/>
        <end position="357"/>
    </location>
</feature>
<feature type="strand" evidence="57">
    <location>
        <begin position="361"/>
        <end position="367"/>
    </location>
</feature>
<feature type="helix" evidence="57">
    <location>
        <begin position="368"/>
        <end position="381"/>
    </location>
</feature>
<feature type="turn" evidence="57">
    <location>
        <begin position="386"/>
        <end position="388"/>
    </location>
</feature>
<feature type="strand" evidence="57">
    <location>
        <begin position="389"/>
        <end position="392"/>
    </location>
</feature>
<feature type="strand" evidence="55">
    <location>
        <begin position="393"/>
        <end position="395"/>
    </location>
</feature>
<feature type="strand" evidence="57">
    <location>
        <begin position="404"/>
        <end position="409"/>
    </location>
</feature>
<feature type="helix" evidence="57">
    <location>
        <begin position="410"/>
        <end position="414"/>
    </location>
</feature>
<feature type="helix" evidence="57">
    <location>
        <begin position="421"/>
        <end position="431"/>
    </location>
</feature>
<feature type="strand" evidence="57">
    <location>
        <begin position="434"/>
        <end position="442"/>
    </location>
</feature>
<feature type="helix" evidence="57">
    <location>
        <begin position="443"/>
        <end position="445"/>
    </location>
</feature>
<feature type="turn" evidence="57">
    <location>
        <begin position="449"/>
        <end position="452"/>
    </location>
</feature>
<feature type="helix" evidence="57">
    <location>
        <begin position="453"/>
        <end position="457"/>
    </location>
</feature>
<feature type="strand" evidence="57">
    <location>
        <begin position="458"/>
        <end position="461"/>
    </location>
</feature>
<feature type="strand" evidence="57">
    <location>
        <begin position="463"/>
        <end position="468"/>
    </location>
</feature>
<feature type="strand" evidence="57">
    <location>
        <begin position="473"/>
        <end position="475"/>
    </location>
</feature>
<feature type="helix" evidence="57">
    <location>
        <begin position="477"/>
        <end position="479"/>
    </location>
</feature>
<feature type="helix" evidence="57">
    <location>
        <begin position="480"/>
        <end position="483"/>
    </location>
</feature>
<feature type="strand" evidence="57">
    <location>
        <begin position="486"/>
        <end position="490"/>
    </location>
</feature>
<feature type="helix" evidence="57">
    <location>
        <begin position="493"/>
        <end position="498"/>
    </location>
</feature>
<feature type="strand" evidence="54">
    <location>
        <begin position="505"/>
        <end position="512"/>
    </location>
</feature>
<feature type="helix" evidence="54">
    <location>
        <begin position="516"/>
        <end position="524"/>
    </location>
</feature>
<feature type="helix" evidence="54">
    <location>
        <begin position="528"/>
        <end position="530"/>
    </location>
</feature>
<feature type="helix" evidence="54">
    <location>
        <begin position="531"/>
        <end position="536"/>
    </location>
</feature>
<feature type="helix" evidence="54">
    <location>
        <begin position="538"/>
        <end position="552"/>
    </location>
</feature>
<feature type="turn" evidence="54">
    <location>
        <begin position="553"/>
        <end position="555"/>
    </location>
</feature>
<feature type="strand" evidence="54">
    <location>
        <begin position="558"/>
        <end position="561"/>
    </location>
</feature>
<feature type="helix" evidence="54">
    <location>
        <begin position="565"/>
        <end position="574"/>
    </location>
</feature>
<feature type="strand" evidence="58">
    <location>
        <begin position="582"/>
        <end position="584"/>
    </location>
</feature>
<feature type="helix" evidence="54">
    <location>
        <begin position="586"/>
        <end position="598"/>
    </location>
</feature>
<feature type="strand" evidence="54">
    <location>
        <begin position="604"/>
        <end position="607"/>
    </location>
</feature>
<feature type="helix" evidence="54">
    <location>
        <begin position="609"/>
        <end position="611"/>
    </location>
</feature>
<feature type="turn" evidence="54">
    <location>
        <begin position="612"/>
        <end position="614"/>
    </location>
</feature>
<feature type="strand" evidence="54">
    <location>
        <begin position="620"/>
        <end position="626"/>
    </location>
</feature>
<feature type="strand" evidence="56">
    <location>
        <begin position="629"/>
        <end position="631"/>
    </location>
</feature>
<feature type="helix" evidence="54">
    <location>
        <begin position="633"/>
        <end position="643"/>
    </location>
</feature>
<feature type="strand" evidence="54">
    <location>
        <begin position="651"/>
        <end position="654"/>
    </location>
</feature>
<feature type="strand" evidence="54">
    <location>
        <begin position="656"/>
        <end position="664"/>
    </location>
</feature>
<feature type="helix" evidence="54">
    <location>
        <begin position="668"/>
        <end position="670"/>
    </location>
</feature>
<feature type="helix" evidence="54">
    <location>
        <begin position="671"/>
        <end position="682"/>
    </location>
</feature>
<feature type="strand" evidence="54">
    <location>
        <begin position="686"/>
        <end position="692"/>
    </location>
</feature>
<feature type="helix" evidence="54">
    <location>
        <begin position="696"/>
        <end position="698"/>
    </location>
</feature>
<feature type="helix" evidence="54">
    <location>
        <begin position="706"/>
        <end position="718"/>
    </location>
</feature>
<feature type="helix" evidence="54">
    <location>
        <begin position="721"/>
        <end position="724"/>
    </location>
</feature>